<comment type="function">
    <text evidence="7 9 12 18 19 20 23 29 30 31 33 48">Telomerase is a ribonucleoprotein enzyme essential for the replication of chromosome termini in most eukaryotes. Active in progenitor and cancer cells. Inactive, or very low activity, in normal somatic cells. Catalytic component of the teleromerase holoenzyme complex whose main activity is the elongation of telomeres by acting as a reverse transcriptase that adds simple sequence repeats to chromosome ends by copying a template sequence within the RNA component of the enzyme. Catalyzes the RNA-dependent extension of 3'-chromosomal termini with the 6-nucleotide telomeric repeat unit, 5'-TTAGGG-3'. The catalytic cycle involves primer binding, primer extension and release of product once the template boundary has been reached or nascent product translocation followed by further extension. More active on substrates containing 2 or 3 telomeric repeats. Telomerase activity is regulated by a number of factors including telomerase complex-associated proteins, chaperones and polypeptide modifiers. Modulates Wnt signaling. Plays important roles in aging and antiapoptosis.</text>
</comment>
<comment type="catalytic activity">
    <reaction evidence="37 45">
        <text>DNA(n) + a 2'-deoxyribonucleoside 5'-triphosphate = DNA(n+1) + diphosphate</text>
        <dbReference type="Rhea" id="RHEA:22508"/>
        <dbReference type="Rhea" id="RHEA-COMP:17339"/>
        <dbReference type="Rhea" id="RHEA-COMP:17340"/>
        <dbReference type="ChEBI" id="CHEBI:33019"/>
        <dbReference type="ChEBI" id="CHEBI:61560"/>
        <dbReference type="ChEBI" id="CHEBI:173112"/>
        <dbReference type="EC" id="2.7.7.49"/>
    </reaction>
</comment>
<comment type="subunit">
    <text evidence="1 5 6 8 10 26 28 30 34 38 39 44 45">Catalytic component of the telomerase holoenzyme complex composed of one molecule of TERT, one molecule of WRAP53/TCAB1, two molecules of H/ACA ribonucleoprotein complex subunits DKC1, NOP10, NHP2 and GAR1, and a telomerase RNA template component (TERC) (PubMed:19179534, PubMed:20351177, PubMed:29695869). The telomerase holoenzyme complex is associated with TEP1, SMG6/EST1A and POT1 (PubMed:19179534). The molecular chaperone HSP90/P23 complex is required for correct assembly and stabilization of the active telomerase (PubMed:11274138). Interacts directly with HSP90A and PTGES3 (PubMed:11274138). Interacts with HSPA1A; the interaction occurs in the absence of TERC and dissociates once the complex has formed (PubMed:11274138). Interacts with RAN; the interaction promotes nuclear export of TERT (PubMed:12808100). Interacts with XPO1 (PubMed:12808100). Interacts with PTPN11; the interaction retains TERT in the nucleus (PubMed:18829466). Interacts with NCL (via RRM1 and C-terminal RRM4/Arg/Gly-rich domains); the interaction is important for nucleolar localization of TERT (PubMed:15371412). Interacts with SMARCA4 (via the bromodomain); the interaction regulates Wnt-mediated signaling (By similarity). Interacts with MCRS1 (isoform MCRS2); the interaction inhibits in vitro telomerase activity (PubMed:15044100). Interacts with PIF1; the interaction has no effect on the elongation activity of TERT (By similarity). Interacts with PML; the interaction recruits TERT to PML bodies and inhibits telomerase activity (PubMed:19567472). Interacts with GNL3L (By similarity). Interacts with isoform 1 and isoform 2 of NVL (PubMed:22226966). Interacts with DHX36 (PubMed:21846770). Interacts with ATF7 (PubMed:29490055).</text>
</comment>
<comment type="interaction">
    <interactant intactId="EBI-1772203">
        <id>O14746</id>
    </interactant>
    <interactant intactId="EBI-491549">
        <id>P35222</id>
        <label>CTNNB1</label>
    </interactant>
    <organismsDiffer>false</organismsDiffer>
    <experiments>2</experiments>
</comment>
<comment type="interaction">
    <interactant intactId="EBI-1772203">
        <id>O14746</id>
    </interactant>
    <interactant intactId="EBI-641642">
        <id>Q9BVP2</id>
        <label>GNL3</label>
    </interactant>
    <organismsDiffer>false</organismsDiffer>
    <experiments>3</experiments>
</comment>
<comment type="interaction">
    <interactant intactId="EBI-1772203">
        <id>O14746</id>
    </interactant>
    <interactant intactId="EBI-78579">
        <id>P06748</id>
        <label>NPM1</label>
    </interactant>
    <organismsDiffer>false</organismsDiffer>
    <experiments>5</experiments>
</comment>
<comment type="interaction">
    <interactant intactId="EBI-1772203">
        <id>O14746</id>
    </interactant>
    <interactant intactId="EBI-721782">
        <id>Q96BK5</id>
        <label>PINX1</label>
    </interactant>
    <organismsDiffer>false</organismsDiffer>
    <experiments>6</experiments>
</comment>
<comment type="interaction">
    <interactant intactId="EBI-1772203">
        <id>O14746</id>
    </interactant>
    <interactant intactId="EBI-304008">
        <id>P29590-5</id>
        <label>PML</label>
    </interactant>
    <organismsDiffer>false</organismsDiffer>
    <experiments>7</experiments>
</comment>
<comment type="interaction">
    <interactant intactId="EBI-1772203">
        <id>O14746</id>
    </interactant>
    <interactant intactId="EBI-353675">
        <id>Q9Y265</id>
        <label>RUVBL1</label>
    </interactant>
    <organismsDiffer>false</organismsDiffer>
    <experiments>11</experiments>
</comment>
<comment type="interaction">
    <interactant intactId="EBI-1772203">
        <id>O14746</id>
    </interactant>
    <interactant intactId="EBI-302489">
        <id>P51532</id>
        <label>SMARCA4</label>
    </interactant>
    <organismsDiffer>false</organismsDiffer>
    <experiments>8</experiments>
</comment>
<comment type="interaction">
    <interactant intactId="EBI-1772203">
        <id>O14746</id>
    </interactant>
    <interactant intactId="EBI-1772203">
        <id>O14746</id>
        <label>TERT</label>
    </interactant>
    <organismsDiffer>false</organismsDiffer>
    <experiments>3</experiments>
</comment>
<comment type="interaction">
    <interactant intactId="EBI-1772203">
        <id>O14746</id>
    </interactant>
    <interactant intactId="EBI-15619703">
        <id>O14773-1</id>
        <label>TPP1</label>
    </interactant>
    <organismsDiffer>false</organismsDiffer>
    <experiments>2</experiments>
</comment>
<comment type="interaction">
    <interactant intactId="EBI-1772203">
        <id>O14746</id>
    </interactant>
    <interactant intactId="EBI-373471">
        <id>Q92900</id>
        <label>UPF1</label>
    </interactant>
    <organismsDiffer>false</organismsDiffer>
    <experiments>3</experiments>
</comment>
<comment type="interaction">
    <interactant intactId="EBI-1772203">
        <id>O14746</id>
    </interactant>
    <interactant intactId="EBI-1177242">
        <id>P03126</id>
        <label>E6</label>
    </interactant>
    <organismsDiffer>true</organismsDiffer>
    <experiments>7</experiments>
</comment>
<comment type="subcellular location">
    <subcellularLocation>
        <location evidence="39">Nucleus</location>
        <location evidence="39">Nucleolus</location>
    </subcellularLocation>
    <subcellularLocation>
        <location>Nucleus</location>
        <location>Nucleoplasm</location>
    </subcellularLocation>
    <subcellularLocation>
        <location>Nucleus</location>
    </subcellularLocation>
    <subcellularLocation>
        <location>Chromosome</location>
        <location>Telomere</location>
    </subcellularLocation>
    <subcellularLocation>
        <location>Cytoplasm</location>
    </subcellularLocation>
    <subcellularLocation>
        <location>Nucleus</location>
        <location>PML body</location>
    </subcellularLocation>
    <text>Shuttling between nuclear and cytoplasm depends on cell cycle, phosphorylation states, transformation and DNA damage. Diffuse localization in the nucleoplasm. Enriched in nucleoli of certain cell types. Translocated to the cytoplasm via nuclear pores in a CRM1/RAN-dependent manner involving oxidative stress-mediated phosphorylation at Tyr-707. Dephosphorylation at this site by SHP2 retains TERT in the nucleus. Translocated to the nucleus by phosphorylation by AKT.</text>
</comment>
<comment type="alternative products">
    <event type="alternative splicing"/>
    <isoform>
        <id>O14746-1</id>
        <name>1</name>
        <sequence type="displayed"/>
    </isoform>
    <isoform>
        <id>O14746-2</id>
        <name>2</name>
        <sequence type="described" ref="VSP_019587 VSP_019588"/>
    </isoform>
    <isoform>
        <id>O14746-3</id>
        <name>3</name>
        <sequence type="described" ref="VSP_021727"/>
    </isoform>
    <isoform>
        <id>O14746-4</id>
        <name>4</name>
        <sequence type="described" ref="VSP_053369 VSP_019587 VSP_019588"/>
    </isoform>
</comment>
<comment type="tissue specificity">
    <text evidence="47 48">Expressed at a high level in thymocyte subpopulations, at an intermediate level in tonsil T-lymphocytes, and at a low to undetectable level in peripheral blood T-lymphocytes.</text>
</comment>
<comment type="induction">
    <text evidence="47">Activated by cytotoxic events and down-regulated during aging. In peripheral T-lymphocytes, induced By CD3 and by PMA/ionomycin. Inhibited by herbimycin B.</text>
</comment>
<comment type="domain">
    <text>The primer grip sequence in the RT domain is required for telomerase activity and for stable association with short telomeric primers.</text>
</comment>
<comment type="domain">
    <text>The RNA-interacting domain 1 (RD1)/N-terminal extension (NTE) is required for interaction with the pseudoknot-template domain of each of TERC dimers. It contains anchor sites that bind primer nucleotides upstream of the RNA-DNA hybrid and is thus an essential determinant of repeat addition processivity.</text>
</comment>
<comment type="domain">
    <text>The RNA-interacting domain 2 (RD2) is essential for both interaction with the CR4-CR5 domain of TERC and for DNA synthesis.</text>
</comment>
<comment type="PTM">
    <text evidence="6 26 40 43">Phosphorylation at Tyr-707 under oxidative stress leads to translocation of TERT to the cytoplasm and reduces its antiapoptotic activity. Dephosphorylated by SHP2/PTPN11 leading to nuclear retention. Phosphorylation at Ser-227 by the AKT pathway promotes nuclear location. Phosphorylation at the G2/M phase at Ser-457 by DYRK2 promotes ubiquitination by the EDVP complex and degradation.</text>
</comment>
<comment type="PTM">
    <text evidence="43">Ubiquitinated by the EDVP complex, a E3 ligase complex following phosphorylation at Ser-457 by DYRK2. Ubiquitinated leads to proteasomal degradation.</text>
</comment>
<comment type="PTM">
    <text evidence="43">(Microbial infection) In case of infection by HIV-1, the EDVP complex is hijacked by HIV-1 via interaction between HIV-1 Vpr and DCAF1/VPRBP, leading to ubiquitination and degradation.</text>
</comment>
<comment type="disease">
    <text>Activation of telomerase has been implicated in cell immortalization and cancer cell pathogenesis.</text>
</comment>
<comment type="disease" evidence="13 16 17 32">
    <disease id="DI-02842">
        <name>Aplastic anemia</name>
        <acronym>AA</acronym>
        <description>A form of anemia in which the bone marrow fails to produce adequate numbers of peripheral blood elements. It is characterized by peripheral pancytopenia and marrow hypoplasia.</description>
        <dbReference type="MIM" id="609135"/>
    </disease>
    <text>Disease susceptibility is associated with variants affecting the gene represented in this entry.</text>
</comment>
<comment type="disease">
    <text>Genetic variations in TERT are associated with coronary artery disease (CAD).</text>
</comment>
<comment type="disease" evidence="13 14 37">
    <disease id="DI-00407">
        <name>Dyskeratosis congenita, autosomal dominant, 2</name>
        <acronym>DKCA2</acronym>
        <description>A rare multisystem disorder caused by defective telomere maintenance. It is characterized by progressive bone marrow failure, and the clinical triad of reticulated skin hyperpigmentation, nail dystrophy, and mucosal leukoplakia. Common but variable features include premature graying, aplastic anemia, low platelets, osteoporosis, pulmonary fibrosis, and liver fibrosis among others. Early mortality is often associated with bone marrow failure, infections, fatal pulmonary complications, or malignancy.</description>
        <dbReference type="MIM" id="613989"/>
    </disease>
    <text>The disease is caused by variants affecting the gene represented in this entry.</text>
</comment>
<comment type="disease" evidence="11 21 22 35 36 41">
    <disease id="DI-03500">
        <name>Pulmonary fibrosis, and/or bone marrow failure syndrome, telomere-related, 1</name>
        <acronym>PFBMFT1</acronym>
        <description>An autosomal dominant disease associated with shortened telomeres. Pulmonary fibrosis is the most common manifestation. Other manifestations include aplastic anemia due to bone marrow failure, hepatic fibrosis, and increased cancer risk, particularly myelodysplastic syndrome and acute myeloid leukemia. Phenotype, age at onset, and severity are determined by telomere length.</description>
        <dbReference type="MIM" id="614742"/>
    </disease>
    <text>The disease is caused by variants affecting the gene represented in this entry.</text>
</comment>
<comment type="disease" evidence="15 24 25 37">
    <disease id="DI-03166">
        <name>Dyskeratosis congenita, autosomal recessive, 4</name>
        <acronym>DKCB4</acronym>
        <description>A severe form of dyskeratosis congenita, a rare multisystem disorder caused by defective telomere maintenance. It is characterized by progressive bone marrow failure, and the clinical triad of reticulated skin hyperpigmentation, nail dystrophy, and mucosal leukoplakia. Common but variable features include premature graying, aplastic anemia, low platelets, osteoporosis, pulmonary fibrosis, and liver fibrosis among others. Early mortality is often associated with bone marrow failure, infections, fatal pulmonary complications, or malignancy.</description>
        <dbReference type="MIM" id="613989"/>
    </disease>
    <text>The disease is caused by variants affecting the gene represented in this entry.</text>
</comment>
<comment type="disease" evidence="42">
    <disease id="DI-03701">
        <name>Melanoma, cutaneous malignant 9</name>
        <acronym>CMM9</acronym>
        <description>A malignant neoplasm of melanocytes, arising de novo or from a pre-existing benign nevus, which occurs most often in the skin but may also involve other sites.</description>
        <dbReference type="MIM" id="615134"/>
    </disease>
    <text>Disease susceptibility is associated with variants affecting the gene represented in this entry.</text>
</comment>
<comment type="miscellaneous">
    <molecule>Isoform 3</molecule>
    <text evidence="53">May be produced at very low levels due to a premature stop codon in the mRNA, leading to nonsense-mediated mRNA decay.</text>
</comment>
<comment type="similarity">
    <text evidence="53">Belongs to the reverse transcriptase family. Telomerase subfamily.</text>
</comment>
<keyword id="KW-0002">3D-structure</keyword>
<keyword id="KW-0025">Alternative splicing</keyword>
<keyword id="KW-0158">Chromosome</keyword>
<keyword id="KW-0963">Cytoplasm</keyword>
<keyword id="KW-0225">Disease variant</keyword>
<keyword id="KW-0238">DNA-binding</keyword>
<keyword id="KW-1011">Dyskeratosis congenita</keyword>
<keyword id="KW-0460">Magnesium</keyword>
<keyword id="KW-0479">Metal-binding</keyword>
<keyword id="KW-0548">Nucleotidyltransferase</keyword>
<keyword id="KW-0539">Nucleus</keyword>
<keyword id="KW-0597">Phosphoprotein</keyword>
<keyword id="KW-1267">Proteomics identification</keyword>
<keyword id="KW-1185">Reference proteome</keyword>
<keyword id="KW-0687">Ribonucleoprotein</keyword>
<keyword id="KW-0695">RNA-directed DNA polymerase</keyword>
<keyword id="KW-0779">Telomere</keyword>
<keyword id="KW-0808">Transferase</keyword>
<keyword id="KW-0832">Ubl conjugation</keyword>
<name>TERT_HUMAN</name>
<feature type="chain" id="PRO_0000054925" description="Telomerase reverse transcriptase">
    <location>
        <begin position="1"/>
        <end position="1132"/>
    </location>
</feature>
<feature type="domain" description="Reverse transcriptase" evidence="3">
    <location>
        <begin position="605"/>
        <end position="935"/>
    </location>
</feature>
<feature type="region of interest" description="RNA-interacting domain 1">
    <location>
        <begin position="1"/>
        <end position="230"/>
    </location>
</feature>
<feature type="region of interest" description="GQ motif">
    <location>
        <begin position="58"/>
        <end position="197"/>
    </location>
</feature>
<feature type="region of interest" description="Required for regulating specificity for telomeric DNA and for processivity for primer elongation">
    <location>
        <begin position="137"/>
        <end position="141"/>
    </location>
</feature>
<feature type="region of interest" description="Disordered" evidence="4">
    <location>
        <begin position="210"/>
        <end position="320"/>
    </location>
</feature>
<feature type="region of interest" description="Linker">
    <location>
        <begin position="231"/>
        <end position="324"/>
    </location>
</feature>
<feature type="region of interest" description="Required for oligomerization">
    <location>
        <begin position="301"/>
        <end position="538"/>
    </location>
</feature>
<feature type="region of interest" description="RNA-interacting domain 2">
    <location>
        <begin position="325"/>
        <end position="550"/>
    </location>
</feature>
<feature type="region of interest" description="QFP motif">
    <location>
        <begin position="376"/>
        <end position="521"/>
    </location>
</feature>
<feature type="region of interest" description="CP motif">
    <location>
        <begin position="397"/>
        <end position="417"/>
    </location>
</feature>
<feature type="region of interest" description="Required for oligomerization">
    <location>
        <begin position="914"/>
        <end position="928"/>
    </location>
</feature>
<feature type="region of interest" description="Primer grip sequence">
    <location>
        <begin position="930"/>
        <end position="934"/>
    </location>
</feature>
<feature type="region of interest" description="CTE">
    <location>
        <begin position="936"/>
        <end position="1132"/>
    </location>
</feature>
<feature type="short sequence motif" description="Bipartite nuclear localization signal">
    <location>
        <begin position="222"/>
        <end position="240"/>
    </location>
</feature>
<feature type="short sequence motif" description="TFLY; involved in RNA binding" evidence="2">
    <location>
        <begin position="328"/>
        <end position="333"/>
    </location>
</feature>
<feature type="compositionally biased region" description="Low complexity" evidence="4">
    <location>
        <begin position="213"/>
        <end position="234"/>
    </location>
</feature>
<feature type="compositionally biased region" description="Basic residues" evidence="4">
    <location>
        <begin position="293"/>
        <end position="304"/>
    </location>
</feature>
<feature type="compositionally biased region" description="Pro residues" evidence="4">
    <location>
        <begin position="310"/>
        <end position="320"/>
    </location>
</feature>
<feature type="binding site" evidence="3">
    <location>
        <position position="712"/>
    </location>
    <ligand>
        <name>Mg(2+)</name>
        <dbReference type="ChEBI" id="CHEBI:18420"/>
        <note>catalytic</note>
    </ligand>
</feature>
<feature type="binding site" evidence="3">
    <location>
        <position position="868"/>
    </location>
    <ligand>
        <name>Mg(2+)</name>
        <dbReference type="ChEBI" id="CHEBI:18420"/>
        <note>catalytic</note>
    </ligand>
</feature>
<feature type="binding site" evidence="3">
    <location>
        <position position="869"/>
    </location>
    <ligand>
        <name>Mg(2+)</name>
        <dbReference type="ChEBI" id="CHEBI:18420"/>
        <note>catalytic</note>
    </ligand>
</feature>
<feature type="site" description="Required for optimal binding of telomeric ssDNA and incorporation of nucleotides at the second position of the template">
    <location>
        <position position="169"/>
    </location>
</feature>
<feature type="site" description="Required for nucleotide incorporation and primer extension rate">
    <location>
        <position position="867"/>
    </location>
</feature>
<feature type="modified residue" description="Phosphoserine; by PKB/AKT1" evidence="40">
    <location>
        <position position="227"/>
    </location>
</feature>
<feature type="modified residue" description="Phosphoserine; by DYRK2" evidence="43">
    <location>
        <position position="457"/>
    </location>
</feature>
<feature type="modified residue" description="Phosphotyrosine; by SRC-type Tyr-kinases" evidence="6 26">
    <location>
        <position position="707"/>
    </location>
</feature>
<feature type="splice variant" id="VSP_053369" description="In isoform 4." evidence="52">
    <location>
        <begin position="711"/>
        <end position="722"/>
    </location>
</feature>
<feature type="splice variant" id="VSP_019587" description="In isoform 2 and isoform 4." evidence="51 52">
    <original>STLTDLQPYMRQFVAHLQETSPLRDAVVIEQSSSLNEASSGLFD</original>
    <variation>LRPVPGDPAGLHPLHAALQPVLRRHGEQAVCGDSAGRAAPAFGG</variation>
    <location>
        <begin position="764"/>
        <end position="807"/>
    </location>
</feature>
<feature type="splice variant" id="VSP_019588" description="In isoform 2 and isoform 4." evidence="51 52">
    <location>
        <begin position="808"/>
        <end position="1132"/>
    </location>
</feature>
<feature type="splice variant" id="VSP_021727" description="In isoform 3." evidence="52">
    <location>
        <begin position="885"/>
        <end position="947"/>
    </location>
</feature>
<feature type="sequence variant" id="VAR_062535" description="In PFBMFT1; impaired telomerase activity; dbSNP:rs387907247." evidence="21">
    <original>L</original>
    <variation>Q</variation>
    <location>
        <position position="55"/>
    </location>
</feature>
<feature type="sequence variant" id="VAR_062780" description="Risk factor for acute myeloid leukemia; dbSNP:rs544215765." evidence="27 32">
    <original>P</original>
    <variation>A</variation>
    <location>
        <position position="65"/>
    </location>
</feature>
<feature type="sequence variant" id="VAR_068792" description="In PFBMFT1; the mutant protein is demonstrated to cause decreased telomerase activity; dbSNP:rs387907248." evidence="35">
    <original>V</original>
    <variation>M</variation>
    <location>
        <position position="170"/>
    </location>
</feature>
<feature type="sequence variant" id="VAR_036863" description="In PFBMFT1 and AA; severe and moderate; shorter telomeres; dbSNP:rs121918661." evidence="11 13 32">
    <original>A</original>
    <variation>T</variation>
    <location>
        <position position="202"/>
    </location>
</feature>
<feature type="sequence variant" id="VAR_036864" description="In dbSNP:rs61748181." evidence="11">
    <original>A</original>
    <variation>T</variation>
    <location>
        <position position="279"/>
    </location>
</feature>
<feature type="sequence variant" id="VAR_062781" description="Risk factor for acute myeloid leukemia; dbSNP:rs756624928." evidence="27 32">
    <original>V</original>
    <variation>M</variation>
    <location>
        <position position="299"/>
    </location>
</feature>
<feature type="sequence variant" id="VAR_084996" description="In dbSNP:rs777343359." evidence="46">
    <original>R</original>
    <variation>P</variation>
    <location>
        <position position="381"/>
    </location>
</feature>
<feature type="sequence variant" id="VAR_025149" description="In PFBMFT1, AA and DKCB4; severe and moderate; risk factor for acute myelogenous leukemia; the mutant protein has 36% residual activity; dbSNP:rs34094720." evidence="11 25 27 32 50">
    <original>H</original>
    <variation>Y</variation>
    <location>
        <position position="412"/>
    </location>
</feature>
<feature type="sequence variant" id="VAR_036865" description="In AA; risk factor for acute myeloid leukemia." evidence="11 27 32">
    <location>
        <position position="441"/>
    </location>
</feature>
<feature type="sequence variant" id="VAR_062782" description="Risk factor for acute myeloid leukemia; dbSNP:rs1751108994." evidence="27 32">
    <original>R</original>
    <variation>K</variation>
    <location>
        <position position="522"/>
    </location>
</feature>
<feature type="sequence variant" id="VAR_062536" description="In AA; abolishes telomerase catalytic activity but no effect on binding to TERC; dbSNP:rs1554041299." evidence="17 32">
    <original>K</original>
    <variation>N</variation>
    <location>
        <position position="570"/>
    </location>
</feature>
<feature type="sequence variant" id="VAR_062783" description="In AA; dbSNP:rs199422294." evidence="32">
    <original>R</original>
    <variation>Q</variation>
    <location>
        <position position="631"/>
    </location>
</feature>
<feature type="sequence variant" id="VAR_062537" description="In AA; non-severe; abolishes telomerase catalytic activity but little effect on binding to TERC; dbSNP:rs199422295." evidence="16 17">
    <original>G</original>
    <variation>D</variation>
    <location>
        <position position="682"/>
    </location>
</feature>
<feature type="sequence variant" id="VAR_036866" description="In PFBMFT1 and AA; moderate; dbSNP:rs121918662." evidence="11 32">
    <original>V</original>
    <variation>M</variation>
    <location>
        <position position="694"/>
    </location>
</feature>
<feature type="sequence variant" id="VAR_068793" description="In DKCB4; the mutant protein has 13% residual activity; dbSNP:rs199422297." evidence="25 37">
    <original>P</original>
    <variation>S</variation>
    <location>
        <position position="704"/>
    </location>
</feature>
<feature type="sequence variant" id="VAR_068794" description="In PFBMFT1; the mutant protein is demonstrated to cause severely compromised telomerase activity; dbSNP:rs387907249." evidence="35">
    <original>A</original>
    <variation>T</variation>
    <location>
        <position position="716"/>
    </location>
</feature>
<feature type="sequence variant" id="VAR_062538" description="In DKCB4; no effect on telomerase catalytic activity and little effect on binding to TERC; dbSNP:rs199422299." evidence="15 17">
    <original>P</original>
    <variation>R</variation>
    <location>
        <position position="721"/>
    </location>
</feature>
<feature type="sequence variant" id="VAR_062539" description="In AA; very severe; no effect on telomerase catalytic activity but shortened telomeres; dbSNP:rs149566858." evidence="16 17">
    <original>T</original>
    <variation>M</variation>
    <location>
        <position position="726"/>
    </location>
</feature>
<feature type="sequence variant" id="VAR_036867" description="In PFBMFT1; moderate; dbSNP:rs121918663." evidence="11">
    <original>Y</original>
    <variation>C</variation>
    <location>
        <position position="772"/>
    </location>
</feature>
<feature type="sequence variant" id="VAR_062784" description="In AA; dbSNP:rs483352771." evidence="32">
    <original>P</original>
    <variation>L</variation>
    <location>
        <position position="785"/>
    </location>
</feature>
<feature type="sequence variant" id="VAR_068795" description="In PFBMFT1; associated with Met-867 in cis on the same allele; the double mutant shows severe defects in telomere repeat addition processivity; dbSNP:rs141425941." evidence="36">
    <original>V</original>
    <variation>I</variation>
    <location>
        <position position="791"/>
    </location>
</feature>
<feature type="sequence variant" id="VAR_062540" description="In DKCB4; 50% reduction in telomerase activity; dbSNP:rs199422301." evidence="24">
    <original>R</original>
    <variation>C</variation>
    <location>
        <position position="811"/>
    </location>
</feature>
<feature type="sequence variant" id="VAR_068796" description="In PFBMFT1." evidence="35">
    <original>L</original>
    <variation>F</variation>
    <location>
        <position position="841"/>
    </location>
</feature>
<feature type="sequence variant" id="VAR_036868" description="In PFBMFT1; dbSNP:rs121918666." evidence="22">
    <original>R</original>
    <variation>H</variation>
    <location>
        <position position="865"/>
    </location>
</feature>
<feature type="sequence variant" id="VAR_068797" description="In PFBMFT1; associated with Ile-791 in cis on the same allele; the double mutant shows severe defects in telomere repeat addition processivity; this mutation causes most if not all of the functional defects; dbSNP:rs201159197." evidence="36">
    <original>V</original>
    <variation>M</variation>
    <location>
        <position position="867"/>
    </location>
</feature>
<feature type="sequence variant" id="VAR_062541" description="In DKCB4; severe phenotype overlapping with Hoyeraal-Hreidarsson syndrome; very short telomeres and greatly reduced telomerase activity; dbSNP:rs199422304." evidence="24">
    <original>R</original>
    <variation>W</variation>
    <location>
        <position position="901"/>
    </location>
</feature>
<feature type="sequence variant" id="VAR_036869" description="In DKCA2; abolishes telomerase catalytic activity but no effect on binding to TERC; dbSNP:rs121918665." evidence="14 17">
    <original>K</original>
    <variation>N</variation>
    <location>
        <position position="902"/>
    </location>
</feature>
<feature type="sequence variant" id="VAR_068798" description="In PFBMFT1; dbSNP:rs387907250." evidence="35">
    <original>K</original>
    <variation>R</variation>
    <location>
        <position position="902"/>
    </location>
</feature>
<feature type="sequence variant" id="VAR_068799" description="In PFBMFT1; dbSNP:rs387907251." evidence="41">
    <original>P</original>
    <variation>L</variation>
    <location>
        <position position="923"/>
    </location>
</feature>
<feature type="sequence variant" id="VAR_053726" description="In dbSNP:rs34062885.">
    <original>S</original>
    <variation>R</variation>
    <location>
        <position position="948"/>
    </location>
</feature>
<feature type="sequence variant" id="VAR_062542" description="In DKCA2; shortened telomeres but no effect on telomerase catalytic activity nor on binding to TERC; dbSNP:rs199422305." evidence="13 17 37">
    <original>R</original>
    <variation>W</variation>
    <location>
        <position position="979"/>
    </location>
</feature>
<feature type="sequence variant" id="VAR_068800" description="In PFBMFT1." evidence="35">
    <original>V</original>
    <variation>F</variation>
    <location>
        <position position="1025"/>
    </location>
</feature>
<feature type="sequence variant" id="VAR_025150" description="Increased incidence in sporadic acute myeloid leukemia; dbSNP:rs35719940." evidence="11 27 32 46 50">
    <original>A</original>
    <variation>T</variation>
    <location>
        <position position="1062"/>
    </location>
</feature>
<feature type="sequence variant" id="VAR_036870" description="In PFBMFT1; severe; dbSNP:rs121918664." evidence="11">
    <original>V</original>
    <variation>M</variation>
    <location>
        <position position="1090"/>
    </location>
</feature>
<feature type="sequence variant" id="VAR_062543" description="In PFBMFT1; uncertain significance; impaired telomerase activity; dbSNP:rs199422306." evidence="21">
    <original>T</original>
    <variation>M</variation>
    <location>
        <position position="1110"/>
    </location>
</feature>
<feature type="sequence variant" id="VAR_062544" description="In DKCA2; severe; shortened telomeres but no effect on telomerase catalytic activity nor on binding to TERC; dbSNP:rs1176273130." evidence="13 17">
    <original>F</original>
    <variation>L</variation>
    <location>
        <position position="1127"/>
    </location>
</feature>
<feature type="mutagenesis site" description="Reduced catalytic activity and repeat addition processivity. Complete loss of catalytic activity but no loss of binding to telomeric primers; when associated with 930-A--A-934." evidence="20">
    <original>WGLLL</original>
    <variation>AAAAA</variation>
    <location>
        <begin position="137"/>
        <end position="141"/>
    </location>
</feature>
<feature type="mutagenesis site" description="About 80% loss of enzymatic activity. Greatly reduced incorporation of second nucleotide. Altered strength of binding to ssDNA. Little effect on repeat addition processivity, nor on TR interaction nor on protein levels." evidence="33">
    <original>Q</original>
    <variation>A</variation>
    <location>
        <position position="169"/>
    </location>
</feature>
<feature type="mutagenesis site" description="About 85% loss of enzymatic activity. Greatly reduced incorporation of second nucleotide. Altered strength of binding to ssDNA. No effect on protein levels nor on TR interaction." evidence="33">
    <original>Q</original>
    <variation>N</variation>
    <location>
        <position position="169"/>
    </location>
</feature>
<feature type="mutagenesis site" description="About 90% loss of enzymatic activity. Greatly reduced incorporation of second nucleotide. Altered strength of binding to ssDNA. No effect on protein levels nor on TR interaction." evidence="33">
    <original>Q</original>
    <variation>T</variation>
    <location>
        <position position="169"/>
    </location>
</feature>
<feature type="mutagenesis site" description="Abolishes phosphorylation by DYRK2." evidence="43">
    <original>S</original>
    <variation>A</variation>
    <location>
        <position position="457"/>
    </location>
</feature>
<feature type="mutagenesis site" description="Defective in high-affinity TERC interactions." evidence="9">
    <original>W</original>
    <variation>A</variation>
    <location>
        <position position="547"/>
    </location>
</feature>
<feature type="mutagenesis site" description="Abolishes telomerase catalytic activity." evidence="18">
    <original>R</original>
    <variation>A</variation>
    <location>
        <position position="631"/>
    </location>
</feature>
<feature type="mutagenesis site" description="Abolishes oxidative stress-induced phosphorylation and RAN binding. Impaired nuclear export and enhanced antiapoptotic activity against ROS-dependent apoptosis induction. Impaired interaction with PTPN11. No dephosphorylation by PTPN11." evidence="6 26">
    <original>Y</original>
    <variation>F</variation>
    <location>
        <position position="707"/>
    </location>
</feature>
<feature type="mutagenesis site" description="Loss of telomerase activity. In the absence of TR, no loss of binding to telomeric primers." evidence="18 20 48 49">
    <original>D</original>
    <variation>A</variation>
    <location>
        <position position="712"/>
    </location>
</feature>
<feature type="mutagenesis site" description="Moderate reduction in telomerase activity, no change in repeat extension rate nor on nucleotide incorporation fidelity. Little further reduction in activity but 13.5-fold increase in nucleotide incorporation fidelity; when associated with M-867." evidence="19">
    <original>L</original>
    <variation>Y</variation>
    <location>
        <position position="866"/>
    </location>
</feature>
<feature type="mutagenesis site" description="About 75% reduction in telomerase activity, about 80% reduction in repeat reduction rate and 3.9-fold increase in nucleotide incorporation fidelity." evidence="19">
    <original>V</original>
    <variation>A</variation>
    <location>
        <position position="867"/>
    </location>
</feature>
<feature type="mutagenesis site" description="About 75% reduction in telomerase activity, about 50% reduction in repeat extension rate and 5.2-fold increase in nucleotide incorporation fidelity. Little further reduction in activity and 13.5-fold increase in nucleotide incorporation fidelity; when associated with Y-866." evidence="19">
    <original>V</original>
    <variation>M</variation>
    <location>
        <position position="867"/>
    </location>
</feature>
<feature type="mutagenesis site" description="Severe reduction in telomerase activity, about 50% reduction in repeat extension rate and 2.2-fold increase in nucleotide incorporation fidelity. No further reduction in activity but 2.8-fold increase in nucleotide incorporation fidelity; when associated with Y-866." evidence="19">
    <original>V</original>
    <variation>T</variation>
    <location>
        <position position="867"/>
    </location>
</feature>
<feature type="mutagenesis site" description="Loss of telomerase activity.">
    <original>DD</original>
    <variation>AA</variation>
    <location>
        <begin position="868"/>
        <end position="869"/>
    </location>
</feature>
<feature type="mutagenesis site" description="Loss of telomerase activity." evidence="9 12 18 48 49">
    <original>D</original>
    <variation>A</variation>
    <location>
        <position position="868"/>
    </location>
</feature>
<feature type="mutagenesis site" description="Loss of telomerase activity." evidence="48 49">
    <original>D</original>
    <variation>A</variation>
    <location>
        <position position="869"/>
    </location>
</feature>
<feature type="mutagenesis site" description="Completely abolishes telomerase-mediated primer extension and reduced binding to short telomeric primers. Complete loss of catalytic activity but no further loss of binding to telomeric primers; when associated with 137-A--A-141." evidence="20">
    <original>WCGLL</original>
    <variation>AAAAA</variation>
    <location>
        <begin position="930"/>
        <end position="934"/>
    </location>
</feature>
<feature type="sequence conflict" description="In Ref. 1; AAC51724." evidence="53" ref="1">
    <original>D</original>
    <variation>G</variation>
    <location>
        <position position="516"/>
    </location>
</feature>
<feature type="helix" evidence="55">
    <location>
        <begin position="8"/>
        <end position="14"/>
    </location>
</feature>
<feature type="helix" evidence="55">
    <location>
        <begin position="15"/>
        <end position="17"/>
    </location>
</feature>
<feature type="strand" evidence="55">
    <location>
        <begin position="21"/>
        <end position="23"/>
    </location>
</feature>
<feature type="helix" evidence="55">
    <location>
        <begin position="24"/>
        <end position="31"/>
    </location>
</feature>
<feature type="strand" evidence="56">
    <location>
        <begin position="32"/>
        <end position="34"/>
    </location>
</feature>
<feature type="helix" evidence="55">
    <location>
        <begin position="45"/>
        <end position="53"/>
    </location>
</feature>
<feature type="strand" evidence="55">
    <location>
        <begin position="54"/>
        <end position="57"/>
    </location>
</feature>
<feature type="strand" evidence="56">
    <location>
        <begin position="60"/>
        <end position="62"/>
    </location>
</feature>
<feature type="helix" evidence="55">
    <location>
        <begin position="77"/>
        <end position="91"/>
    </location>
</feature>
<feature type="helix" evidence="57">
    <location>
        <begin position="96"/>
        <end position="98"/>
    </location>
</feature>
<feature type="strand" evidence="55">
    <location>
        <begin position="99"/>
        <end position="103"/>
    </location>
</feature>
<feature type="strand" evidence="55">
    <location>
        <begin position="114"/>
        <end position="123"/>
    </location>
</feature>
<feature type="helix" evidence="55">
    <location>
        <begin position="126"/>
        <end position="132"/>
    </location>
</feature>
<feature type="helix" evidence="55">
    <location>
        <begin position="135"/>
        <end position="144"/>
    </location>
</feature>
<feature type="helix" evidence="55">
    <location>
        <begin position="146"/>
        <end position="154"/>
    </location>
</feature>
<feature type="strand" evidence="55">
    <location>
        <begin position="157"/>
        <end position="162"/>
    </location>
</feature>
<feature type="turn" evidence="55">
    <location>
        <begin position="163"/>
        <end position="165"/>
    </location>
</feature>
<feature type="strand" evidence="55">
    <location>
        <begin position="166"/>
        <end position="169"/>
    </location>
</feature>
<feature type="strand" evidence="55">
    <location>
        <begin position="171"/>
        <end position="173"/>
    </location>
</feature>
<feature type="turn" evidence="55">
    <location>
        <begin position="175"/>
        <end position="177"/>
    </location>
</feature>
<feature type="strand" evidence="55">
    <location>
        <begin position="325"/>
        <end position="327"/>
    </location>
</feature>
<feature type="helix" evidence="55">
    <location>
        <begin position="328"/>
        <end position="331"/>
    </location>
</feature>
<feature type="strand" evidence="55">
    <location>
        <begin position="343"/>
        <end position="345"/>
    </location>
</feature>
<feature type="helix" evidence="55">
    <location>
        <begin position="346"/>
        <end position="349"/>
    </location>
</feature>
<feature type="helix" evidence="55">
    <location>
        <begin position="354"/>
        <end position="365"/>
    </location>
</feature>
<feature type="helix" evidence="55">
    <location>
        <begin position="384"/>
        <end position="387"/>
    </location>
</feature>
<feature type="helix" evidence="55">
    <location>
        <begin position="390"/>
        <end position="401"/>
    </location>
</feature>
<feature type="helix" evidence="55">
    <location>
        <begin position="405"/>
        <end position="412"/>
    </location>
</feature>
<feature type="helix" evidence="55">
    <location>
        <begin position="445"/>
        <end position="453"/>
    </location>
</feature>
<feature type="helix" evidence="55">
    <location>
        <begin position="458"/>
        <end position="472"/>
    </location>
</feature>
<feature type="helix" evidence="55">
    <location>
        <begin position="475"/>
        <end position="478"/>
    </location>
</feature>
<feature type="helix" evidence="55">
    <location>
        <begin position="481"/>
        <end position="496"/>
    </location>
</feature>
<feature type="strand" evidence="55">
    <location>
        <begin position="502"/>
        <end position="504"/>
    </location>
</feature>
<feature type="helix" evidence="55">
    <location>
        <begin position="505"/>
        <end position="508"/>
    </location>
</feature>
<feature type="strand" evidence="56">
    <location>
        <begin position="509"/>
        <end position="511"/>
    </location>
</feature>
<feature type="helix" evidence="55">
    <location>
        <begin position="518"/>
        <end position="520"/>
    </location>
</feature>
<feature type="strand" evidence="55">
    <location>
        <begin position="522"/>
        <end position="525"/>
    </location>
</feature>
<feature type="helix" evidence="55">
    <location>
        <begin position="531"/>
        <end position="550"/>
    </location>
</feature>
<feature type="helix" evidence="55">
    <location>
        <begin position="552"/>
        <end position="560"/>
    </location>
</feature>
<feature type="strand" evidence="55">
    <location>
        <begin position="561"/>
        <end position="564"/>
    </location>
</feature>
<feature type="strand" evidence="55">
    <location>
        <begin position="567"/>
        <end position="569"/>
    </location>
</feature>
<feature type="strand" evidence="55">
    <location>
        <begin position="574"/>
        <end position="577"/>
    </location>
</feature>
<feature type="helix" evidence="55">
    <location>
        <begin position="578"/>
        <end position="596"/>
    </location>
</feature>
<feature type="strand" evidence="56">
    <location>
        <begin position="598"/>
        <end position="600"/>
    </location>
</feature>
<feature type="helix" evidence="55">
    <location>
        <begin position="603"/>
        <end position="611"/>
    </location>
</feature>
<feature type="strand" evidence="55">
    <location>
        <begin position="612"/>
        <end position="614"/>
    </location>
</feature>
<feature type="strand" evidence="55">
    <location>
        <begin position="617"/>
        <end position="626"/>
    </location>
</feature>
<feature type="strand" evidence="55">
    <location>
        <begin position="629"/>
        <end position="636"/>
    </location>
</feature>
<feature type="turn" evidence="55">
    <location>
        <begin position="647"/>
        <end position="649"/>
    </location>
</feature>
<feature type="strand" evidence="55">
    <location>
        <begin position="650"/>
        <end position="652"/>
    </location>
</feature>
<feature type="helix" evidence="55">
    <location>
        <begin position="654"/>
        <end position="671"/>
    </location>
</feature>
<feature type="helix" evidence="55">
    <location>
        <begin position="673"/>
        <end position="675"/>
    </location>
</feature>
<feature type="turn" evidence="55">
    <location>
        <begin position="676"/>
        <end position="678"/>
    </location>
</feature>
<feature type="helix" evidence="55">
    <location>
        <begin position="683"/>
        <end position="697"/>
    </location>
</feature>
<feature type="strand" evidence="55">
    <location>
        <begin position="700"/>
        <end position="702"/>
    </location>
</feature>
<feature type="strand" evidence="55">
    <location>
        <begin position="709"/>
        <end position="713"/>
    </location>
</feature>
<feature type="turn" evidence="55">
    <location>
        <begin position="714"/>
        <end position="718"/>
    </location>
</feature>
<feature type="helix" evidence="55">
    <location>
        <begin position="722"/>
        <end position="733"/>
    </location>
</feature>
<feature type="strand" evidence="55">
    <location>
        <begin position="738"/>
        <end position="749"/>
    </location>
</feature>
<feature type="strand" evidence="55">
    <location>
        <begin position="755"/>
        <end position="764"/>
    </location>
</feature>
<feature type="helix" evidence="55">
    <location>
        <begin position="766"/>
        <end position="768"/>
    </location>
</feature>
<feature type="helix" evidence="55">
    <location>
        <begin position="773"/>
        <end position="783"/>
    </location>
</feature>
<feature type="strand" evidence="55">
    <location>
        <begin position="788"/>
        <end position="796"/>
    </location>
</feature>
<feature type="helix" evidence="55">
    <location>
        <begin position="802"/>
        <end position="813"/>
    </location>
</feature>
<feature type="strand" evidence="55">
    <location>
        <begin position="815"/>
        <end position="820"/>
    </location>
</feature>
<feature type="strand" evidence="55">
    <location>
        <begin position="823"/>
        <end position="826"/>
    </location>
</feature>
<feature type="strand" evidence="55">
    <location>
        <begin position="835"/>
        <end position="837"/>
    </location>
</feature>
<feature type="helix" evidence="55">
    <location>
        <begin position="838"/>
        <end position="853"/>
    </location>
</feature>
<feature type="helix" evidence="55">
    <location>
        <begin position="855"/>
        <end position="858"/>
    </location>
</feature>
<feature type="strand" evidence="55">
    <location>
        <begin position="861"/>
        <end position="873"/>
    </location>
</feature>
<feature type="helix" evidence="55">
    <location>
        <begin position="877"/>
        <end position="889"/>
    </location>
</feature>
<feature type="turn" evidence="55">
    <location>
        <begin position="892"/>
        <end position="895"/>
    </location>
</feature>
<feature type="strand" evidence="55">
    <location>
        <begin position="904"/>
        <end position="907"/>
    </location>
</feature>
<feature type="turn" evidence="55">
    <location>
        <begin position="913"/>
        <end position="916"/>
    </location>
</feature>
<feature type="strand" evidence="55">
    <location>
        <begin position="919"/>
        <end position="921"/>
    </location>
</feature>
<feature type="strand" evidence="55">
    <location>
        <begin position="924"/>
        <end position="930"/>
    </location>
</feature>
<feature type="strand" evidence="55">
    <location>
        <begin position="933"/>
        <end position="936"/>
    </location>
</feature>
<feature type="turn" evidence="55">
    <location>
        <begin position="937"/>
        <end position="939"/>
    </location>
</feature>
<feature type="strand" evidence="55">
    <location>
        <begin position="942"/>
        <end position="944"/>
    </location>
</feature>
<feature type="helix" evidence="55">
    <location>
        <begin position="947"/>
        <end position="949"/>
    </location>
</feature>
<feature type="strand" evidence="55">
    <location>
        <begin position="952"/>
        <end position="954"/>
    </location>
</feature>
<feature type="turn" evidence="55">
    <location>
        <begin position="955"/>
        <end position="957"/>
    </location>
</feature>
<feature type="strand" evidence="56">
    <location>
        <begin position="963"/>
        <end position="965"/>
    </location>
</feature>
<feature type="helix" evidence="54">
    <location>
        <begin position="966"/>
        <end position="983"/>
    </location>
</feature>
<feature type="helix" evidence="54">
    <location>
        <begin position="984"/>
        <end position="986"/>
    </location>
</feature>
<feature type="turn" evidence="54">
    <location>
        <begin position="989"/>
        <end position="991"/>
    </location>
</feature>
<feature type="helix" evidence="54">
    <location>
        <begin position="994"/>
        <end position="1017"/>
    </location>
</feature>
<feature type="helix" evidence="54">
    <location>
        <begin position="1025"/>
        <end position="1027"/>
    </location>
</feature>
<feature type="helix" evidence="54">
    <location>
        <begin position="1029"/>
        <end position="1050"/>
    </location>
</feature>
<feature type="turn" evidence="54">
    <location>
        <begin position="1051"/>
        <end position="1053"/>
    </location>
</feature>
<feature type="turn" evidence="55">
    <location>
        <begin position="1059"/>
        <end position="1061"/>
    </location>
</feature>
<feature type="strand" evidence="55">
    <location>
        <begin position="1062"/>
        <end position="1065"/>
    </location>
</feature>
<feature type="helix" evidence="54">
    <location>
        <begin position="1067"/>
        <end position="1082"/>
    </location>
</feature>
<feature type="helix" evidence="54">
    <location>
        <begin position="1083"/>
        <end position="1085"/>
    </location>
</feature>
<feature type="helix" evidence="54">
    <location>
        <begin position="1086"/>
        <end position="1104"/>
    </location>
</feature>
<feature type="helix" evidence="54">
    <location>
        <begin position="1111"/>
        <end position="1118"/>
    </location>
</feature>
<feature type="strand" evidence="55">
    <location>
        <begin position="1121"/>
        <end position="1123"/>
    </location>
</feature>
<feature type="turn" evidence="55">
    <location>
        <begin position="1125"/>
        <end position="1129"/>
    </location>
</feature>
<gene>
    <name type="primary">TERT</name>
    <name type="synonym">EST2</name>
    <name type="synonym">TCS1</name>
    <name type="synonym">TRT</name>
</gene>
<reference key="1">
    <citation type="journal article" date="1997" name="Cell">
        <title>hEST2, the putative human telomerase catalytic subunit gene, is up-regulated in tumor cells and during immortalization.</title>
        <authorList>
            <person name="Meyerson M."/>
            <person name="Counter C.M."/>
            <person name="Eaton E.N."/>
            <person name="Ellisen L.W."/>
            <person name="Steiner P."/>
            <person name="Caddle S.D."/>
            <person name="Ziaugra L."/>
            <person name="Beijersbergen R.L."/>
            <person name="Davidoff M.J."/>
            <person name="Liu Q."/>
            <person name="Bacchetti S."/>
            <person name="Haber D.A."/>
            <person name="Weinberg R.A."/>
        </authorList>
    </citation>
    <scope>NUCLEOTIDE SEQUENCE [MRNA] (ISOFORM 1)</scope>
</reference>
<reference key="2">
    <citation type="journal article" date="1997" name="Science">
        <title>Telomerase catalytic subunit homologs from fission yeast and human.</title>
        <authorList>
            <person name="Nakamura T.M."/>
            <person name="Morin G.B."/>
            <person name="Chapman K.B."/>
            <person name="Weinrich S.L."/>
            <person name="Andrews W.H."/>
            <person name="Lingner J."/>
            <person name="Harley C.B."/>
            <person name="Cech T.R."/>
        </authorList>
    </citation>
    <scope>NUCLEOTIDE SEQUENCE [MRNA] (ISOFORM 1)</scope>
    <source>
        <tissue>Embryonic kidney</tissue>
    </source>
</reference>
<reference key="3">
    <citation type="journal article" date="1999" name="Gene">
        <title>Genomic organization and promoter characterization of the gene encoding the human telomerase reverse transcriptase (hTERT).</title>
        <authorList>
            <person name="Wick M."/>
            <person name="Zubov D."/>
            <person name="Hagen G."/>
        </authorList>
    </citation>
    <scope>NUCLEOTIDE SEQUENCE [GENOMIC DNA]</scope>
</reference>
<reference key="4">
    <citation type="journal article" date="2003" name="Neoplasia">
        <title>Expression profile of a gamma-deletion variant of the human telomerase reverse transcriptase gene.</title>
        <authorList>
            <person name="Hisatomi H."/>
            <person name="Ohyashiki K."/>
            <person name="Ohyashiki J.H."/>
            <person name="Nagao K."/>
            <person name="Kanamaru T."/>
            <person name="Hirata H."/>
            <person name="Hibi N."/>
            <person name="Tsukada Y."/>
        </authorList>
    </citation>
    <scope>NUCLEOTIDE SEQUENCE [MRNA] (ISOFORM 2)</scope>
</reference>
<reference key="5">
    <citation type="journal article" date="2004" name="Oncol. Rep.">
        <title>Differential alternative splicing expressions of telomerase reverse transcriptase in gastrointestinal cell lines.</title>
        <authorList>
            <person name="Nagao K."/>
            <person name="Katsumata K."/>
            <person name="Aizawa Y."/>
            <person name="Saito N."/>
            <person name="Hirata H."/>
            <person name="Sasaki H."/>
            <person name="Yamamoto S."/>
            <person name="Hikiji K."/>
            <person name="Koiwa T."/>
            <person name="Hisatomi H."/>
        </authorList>
    </citation>
    <scope>NUCLEOTIDE SEQUENCE [MRNA] (ISOFORMS 3 AND 4)</scope>
    <source>
        <tissue>Stomach cancer</tissue>
    </source>
</reference>
<reference key="6">
    <citation type="submission" date="2001-10" db="EMBL/GenBank/DDBJ databases">
        <title>Sequence of a BAC carrying the entire hTERT gene.</title>
        <authorList>
            <person name="Londono-Vallejo J.A."/>
        </authorList>
    </citation>
    <scope>NUCLEOTIDE SEQUENCE [GENOMIC DNA]</scope>
</reference>
<reference key="7">
    <citation type="submission" date="2005-10" db="EMBL/GenBank/DDBJ databases">
        <authorList>
            <consortium name="NIEHS SNPs program"/>
        </authorList>
    </citation>
    <scope>NUCLEOTIDE SEQUENCE [GENOMIC DNA]</scope>
    <scope>VARIANTS TYR-412 AND THR-1062</scope>
</reference>
<reference key="8">
    <citation type="journal article" date="2004" name="Nature">
        <title>The DNA sequence and comparative analysis of human chromosome 5.</title>
        <authorList>
            <person name="Schmutz J."/>
            <person name="Martin J."/>
            <person name="Terry A."/>
            <person name="Couronne O."/>
            <person name="Grimwood J."/>
            <person name="Lowry S."/>
            <person name="Gordon L.A."/>
            <person name="Scott D."/>
            <person name="Xie G."/>
            <person name="Huang W."/>
            <person name="Hellsten U."/>
            <person name="Tran-Gyamfi M."/>
            <person name="She X."/>
            <person name="Prabhakar S."/>
            <person name="Aerts A."/>
            <person name="Altherr M."/>
            <person name="Bajorek E."/>
            <person name="Black S."/>
            <person name="Branscomb E."/>
            <person name="Caoile C."/>
            <person name="Challacombe J.F."/>
            <person name="Chan Y.M."/>
            <person name="Denys M."/>
            <person name="Detter J.C."/>
            <person name="Escobar J."/>
            <person name="Flowers D."/>
            <person name="Fotopulos D."/>
            <person name="Glavina T."/>
            <person name="Gomez M."/>
            <person name="Gonzales E."/>
            <person name="Goodstein D."/>
            <person name="Grigoriev I."/>
            <person name="Groza M."/>
            <person name="Hammon N."/>
            <person name="Hawkins T."/>
            <person name="Haydu L."/>
            <person name="Israni S."/>
            <person name="Jett J."/>
            <person name="Kadner K."/>
            <person name="Kimball H."/>
            <person name="Kobayashi A."/>
            <person name="Lopez F."/>
            <person name="Lou Y."/>
            <person name="Martinez D."/>
            <person name="Medina C."/>
            <person name="Morgan J."/>
            <person name="Nandkeshwar R."/>
            <person name="Noonan J.P."/>
            <person name="Pitluck S."/>
            <person name="Pollard M."/>
            <person name="Predki P."/>
            <person name="Priest J."/>
            <person name="Ramirez L."/>
            <person name="Retterer J."/>
            <person name="Rodriguez A."/>
            <person name="Rogers S."/>
            <person name="Salamov A."/>
            <person name="Salazar A."/>
            <person name="Thayer N."/>
            <person name="Tice H."/>
            <person name="Tsai M."/>
            <person name="Ustaszewska A."/>
            <person name="Vo N."/>
            <person name="Wheeler J."/>
            <person name="Wu K."/>
            <person name="Yang J."/>
            <person name="Dickson M."/>
            <person name="Cheng J.-F."/>
            <person name="Eichler E.E."/>
            <person name="Olsen A."/>
            <person name="Pennacchio L.A."/>
            <person name="Rokhsar D.S."/>
            <person name="Richardson P."/>
            <person name="Lucas S.M."/>
            <person name="Myers R.M."/>
            <person name="Rubin E.M."/>
        </authorList>
    </citation>
    <scope>NUCLEOTIDE SEQUENCE [LARGE SCALE GENOMIC DNA]</scope>
</reference>
<reference key="9">
    <citation type="submission" date="2005-09" db="EMBL/GenBank/DDBJ databases">
        <authorList>
            <person name="Mural R.J."/>
            <person name="Istrail S."/>
            <person name="Sutton G."/>
            <person name="Florea L."/>
            <person name="Halpern A.L."/>
            <person name="Mobarry C.M."/>
            <person name="Lippert R."/>
            <person name="Walenz B."/>
            <person name="Shatkay H."/>
            <person name="Dew I."/>
            <person name="Miller J.R."/>
            <person name="Flanigan M.J."/>
            <person name="Edwards N.J."/>
            <person name="Bolanos R."/>
            <person name="Fasulo D."/>
            <person name="Halldorsson B.V."/>
            <person name="Hannenhalli S."/>
            <person name="Turner R."/>
            <person name="Yooseph S."/>
            <person name="Lu F."/>
            <person name="Nusskern D.R."/>
            <person name="Shue B.C."/>
            <person name="Zheng X.H."/>
            <person name="Zhong F."/>
            <person name="Delcher A.L."/>
            <person name="Huson D.H."/>
            <person name="Kravitz S.A."/>
            <person name="Mouchard L."/>
            <person name="Reinert K."/>
            <person name="Remington K.A."/>
            <person name="Clark A.G."/>
            <person name="Waterman M.S."/>
            <person name="Eichler E.E."/>
            <person name="Adams M.D."/>
            <person name="Hunkapiller M.W."/>
            <person name="Myers E.W."/>
            <person name="Venter J.C."/>
        </authorList>
    </citation>
    <scope>NUCLEOTIDE SEQUENCE [LARGE SCALE GENOMIC DNA]</scope>
</reference>
<reference key="10">
    <citation type="journal article" date="1996" name="J. Exp. Med.">
        <title>Regulated expression of telomerase activity in human T lymphocyte development and activation.</title>
        <authorList>
            <person name="Weng N.P."/>
            <person name="Levine B.L."/>
            <person name="June C.H."/>
            <person name="Hodes R.J."/>
        </authorList>
    </citation>
    <scope>TISSUE SPECIFICITY</scope>
    <scope>INDUCTION</scope>
</reference>
<reference key="11">
    <citation type="journal article" date="1997" name="Genes Dev.">
        <title>Human telomerase contains evolutionarily conserved catalytic and structural subunits.</title>
        <authorList>
            <person name="Harrington L."/>
            <person name="Zhou W."/>
            <person name="McPhail T."/>
            <person name="Oulton R."/>
            <person name="Yeung D.S."/>
            <person name="Mar V."/>
            <person name="Bass M.B."/>
            <person name="Robinson M.O."/>
        </authorList>
    </citation>
    <scope>FUNCTION IN TELOMERASE ACTIVITY</scope>
    <scope>TISSUE SPECIFICITY</scope>
    <scope>ASSOCIATION WITH TEP1</scope>
    <scope>MUTAGENESIS OF ASP-712; ASP-868 AND ASP-869</scope>
</reference>
<reference key="12">
    <citation type="journal article" date="1998" name="Curr. Biol.">
        <title>Reconstitution of human telomerase activity in vitro.</title>
        <authorList>
            <person name="Beattie T.L."/>
            <person name="Zhou W."/>
            <person name="Robinson M.O."/>
            <person name="Harrington L."/>
        </authorList>
    </citation>
    <scope>RECONSTITUTION OF THE TELOMERASE COMPLEX</scope>
    <scope>MUTAGENESIS OF ASP-712; ASP-868 AND ASP-869</scope>
</reference>
<reference key="13">
    <citation type="journal article" date="2000" name="Mol. Biol. Cell">
        <title>Polymerization defects within human telomerase are distinct from telomerase RNA and TEP1 binding.</title>
        <authorList>
            <person name="Beattie T.L."/>
            <person name="Zhou W."/>
            <person name="Robinson M.O."/>
            <person name="Harrington L."/>
        </authorList>
    </citation>
    <scope>ASSOCIATION WITH TEP1</scope>
</reference>
<reference key="14">
    <citation type="journal article" date="2001" name="J. Biol. Chem.">
        <title>Stable association of hsp90 and p23, but Not hsp70, with active human telomerase.</title>
        <authorList>
            <person name="Forsythe H.L."/>
            <person name="Jarvis J.L."/>
            <person name="Turner J.W."/>
            <person name="Elmore L.W."/>
            <person name="Holt S.E."/>
        </authorList>
    </citation>
    <scope>INTERACTION WITH HSPA1A; HSP90A AND PTGES3</scope>
</reference>
<reference key="15">
    <citation type="journal article" date="2003" name="Mol. Cell. Biol.">
        <title>Hydrogen peroxide triggers nuclear export of telomerase reverse transcriptase via Src kinase family-dependent phosphorylation of tyrosine 707.</title>
        <authorList>
            <person name="Haendeler J."/>
            <person name="Hoffmann J."/>
            <person name="Brandes R.P."/>
            <person name="Zeiher A.M."/>
            <person name="Dimmeler S."/>
        </authorList>
    </citation>
    <scope>PHOSPHORYLATION AT TYR-707</scope>
    <scope>SUBCELLULAR LOCATION</scope>
    <scope>INTERACTION WITH RAN AND XP01</scope>
    <scope>MUTAGENESIS OF TYR-707</scope>
</reference>
<reference key="16">
    <citation type="journal article" date="2004" name="Biochem. Biophys. Res. Commun.">
        <title>Human MCRS2, a cell-cycle-dependent protein, associates with LPTS/PinX1 and reduces the telomere length.</title>
        <authorList>
            <person name="Song H."/>
            <person name="Li Y."/>
            <person name="Chen G."/>
            <person name="Xing Z."/>
            <person name="Zhao J."/>
            <person name="Yokoyama K.K."/>
            <person name="Li T."/>
            <person name="Zhao M."/>
        </authorList>
    </citation>
    <scope>INTERACTION WITH MCRS1</scope>
</reference>
<reference key="17">
    <citation type="journal article" date="2004" name="Circ. Res.">
        <title>Antioxidants inhibit nuclear export of telomerase reverse transcriptase and delay replicative senescence of endothelial cells.</title>
        <authorList>
            <person name="Haendeler J."/>
            <person name="Hoffmann J."/>
            <person name="Diehl J.F."/>
            <person name="Vasa M."/>
            <person name="Spyridopoulos I."/>
            <person name="Zeiher A.M."/>
            <person name="Dimmeler S."/>
        </authorList>
    </citation>
    <scope>SUBCELLULAR LOCATION</scope>
    <scope>FUNCTION</scope>
</reference>
<reference key="18">
    <citation type="journal article" date="2004" name="Histochem. Cell Biol.">
        <title>Immunohistochemical localization of hTERT protein in human tissues.</title>
        <authorList>
            <person name="Yan P."/>
            <person name="Benhattar J."/>
            <person name="Seelentag W."/>
            <person name="Stehle J.C."/>
            <person name="Bosman F.T."/>
        </authorList>
    </citation>
    <scope>SUBCELLULAR LOCATION</scope>
</reference>
<reference key="19">
    <citation type="journal article" date="2004" name="J. Biol. Chem.">
        <title>Nucleolin interacts with telomerase.</title>
        <authorList>
            <person name="Khurts S."/>
            <person name="Masutomi K."/>
            <person name="Delgermaa L."/>
            <person name="Arai K."/>
            <person name="Oishi N."/>
            <person name="Mizuno H."/>
            <person name="Hayashi N."/>
            <person name="Hahn W.C."/>
            <person name="Murakami S."/>
        </authorList>
    </citation>
    <scope>INTERACTION WITH NCL</scope>
    <scope>SUBCELLULAR LOCATION</scope>
</reference>
<reference key="20">
    <citation type="journal article" date="2004" name="Mol. Cell. Biol.">
        <title>Functional organization of repeat addition processivity and DNA synthesis determinants in the human telomerase multimer.</title>
        <authorList>
            <person name="Moriarty T.J."/>
            <person name="Marie-Egyptienne D.T."/>
            <person name="Autexier C."/>
        </authorList>
    </citation>
    <scope>FUNCTIONAL DOMAINS</scope>
    <scope>MUTAGENESIS OF TRP-547 AND ASP-868</scope>
</reference>
<reference key="21">
    <citation type="journal article" date="2005" name="Genes Dev.">
        <title>Ubiquitin ligase MKRN1 modulates telomere length homeostasis through a proteolysis of hTERT.</title>
        <authorList>
            <person name="Kim J.H."/>
            <person name="Park S.-M."/>
            <person name="Kang M.R."/>
            <person name="Oh S.-Y."/>
            <person name="Lee T.H."/>
            <person name="Muller M.T."/>
            <person name="Chung I.K."/>
        </authorList>
    </citation>
    <scope>INTERACTION WITH MKRN1</scope>
    <scope>UBIQUITINATION</scope>
</reference>
<reference key="22">
    <citation type="journal article" date="2005" name="Mol. Biol. Cell">
        <title>An anchor site-type defect in human telomerase that disrupts telomere length maintenance and cellular immortalization.</title>
        <authorList>
            <person name="Moriarty T.J."/>
            <person name="Ward R.J."/>
            <person name="Taboski M.A."/>
            <person name="Autexier C."/>
        </authorList>
    </citation>
    <scope>FUNCTION</scope>
    <scope>MUTAGENESIS OF ASP-868</scope>
</reference>
<reference key="23">
    <citation type="journal article" date="2006" name="Biochem. Biophys. Res. Commun.">
        <title>Telomerase with mutated catalytic motifs has dominant negative effects on telomerase activity and inhibits cell growth.</title>
        <authorList>
            <person name="Rahman R."/>
            <person name="Mo L."/>
            <person name="Cui W."/>
        </authorList>
    </citation>
    <scope>FUNCTION</scope>
    <scope>MUTAGENESIS OF ARG-631; ASP-712 AND ASP-868</scope>
</reference>
<reference key="24">
    <citation type="journal article" date="2007" name="J. Immunol.">
        <title>The loss of telomerase activity in highly differentiated CD8+CD28-CD27- T cells is associated with decreased Akt (Ser473) phosphorylation.</title>
        <authorList>
            <person name="Plunkett F.J."/>
            <person name="Franzese O."/>
            <person name="Finney H.M."/>
            <person name="Fletcher J.M."/>
            <person name="Belaramani L.L."/>
            <person name="Salmon M."/>
            <person name="Dokal I."/>
            <person name="Webster D."/>
            <person name="Lawson A.D."/>
            <person name="Akbar A.N."/>
        </authorList>
    </citation>
    <scope>PHOSPHORYLATION</scope>
    <scope>FUNCTION</scope>
</reference>
<reference key="25">
    <citation type="journal article" date="2007" name="Mol. Cell">
        <title>Purification of human telomerase complexes identifies factors involved in telomerase biogenesis and telomere length regulation.</title>
        <authorList>
            <person name="Fu D."/>
            <person name="Collins K."/>
        </authorList>
    </citation>
    <scope>INTERACTION WITH NAT10</scope>
</reference>
<reference key="26">
    <citation type="journal article" date="2007" name="Mol. Cell. Biol.">
        <title>Characterization of physical and functional anchor site interactions in human telomerase.</title>
        <authorList>
            <person name="Wyatt H.D."/>
            <person name="Lobb D.A."/>
            <person name="Beattie T.L."/>
        </authorList>
    </citation>
    <scope>FUNCTION</scope>
    <scope>DNA-BINDING</scope>
    <scope>MUTAGENESIS OF 137-TRP--LEU-141; ASP-712 AND 930-TRP--LEU-934</scope>
</reference>
<reference key="27">
    <citation type="journal article" date="2007" name="Nucleic Acids Res.">
        <title>The active site residue Valine 867 in human telomerase reverse transcriptase influences nucleotide incorporation and fidelity.</title>
        <authorList>
            <person name="Drosopoulos W.C."/>
            <person name="Prasad V.R."/>
        </authorList>
    </citation>
    <scope>FUNCTION</scope>
    <scope>MUTAGENESIS OF LEU-866 AND VAL-867</scope>
</reference>
<reference key="28">
    <citation type="journal article" date="2008" name="J. Biol. Chem.">
        <title>Nuclear protein tyrosine phosphatase Shp-2 is one important negative regulator of nuclear export of telomerase reverse transcriptase.</title>
        <authorList>
            <person name="Jakob S."/>
            <person name="Schroeder P."/>
            <person name="Lukosz M."/>
            <person name="Buchner N."/>
            <person name="Spyridopoulos I."/>
            <person name="Altschmied J."/>
            <person name="Haendeler J."/>
        </authorList>
    </citation>
    <scope>INTERACTION WITH PTPN11</scope>
    <scope>PHOSPHORYLATION AT TYR-707</scope>
    <scope>SUBCELLULAR LOCATION</scope>
    <scope>MUTAGENESIS OF TYR-707</scope>
</reference>
<reference key="29">
    <citation type="journal article" date="2009" name="Clin. Cancer Res.">
        <title>Ionizing radiation up-regulates telomerase activity in cancer cell lines by post-translational mechanism via ras/phosphatidylinositol 3-kinase/Akt pathway.</title>
        <authorList>
            <person name="Ram R."/>
            <person name="Uziel O."/>
            <person name="Eldan O."/>
            <person name="Fenig E."/>
            <person name="Beery E."/>
            <person name="Lichtenberg S."/>
            <person name="Nordenberg Y."/>
            <person name="Lahav M."/>
        </authorList>
    </citation>
    <scope>PHOSPHORYLATION</scope>
    <scope>FUNCTION</scope>
    <scope>SUBCELLULAR LOCATION</scope>
</reference>
<reference key="30">
    <citation type="journal article" date="2009" name="J. Cell Sci.">
        <title>PML-IV functions as a negative regulator of telomerase by interacting with TERT.</title>
        <authorList>
            <person name="Oh W."/>
            <person name="Ghim J."/>
            <person name="Lee E.W."/>
            <person name="Yang M.R."/>
            <person name="Kim E.T."/>
            <person name="Ahn J.H."/>
            <person name="Song J."/>
        </authorList>
    </citation>
    <scope>FUNCTION</scope>
    <scope>SUBCELLULAR LOCATION</scope>
    <scope>INTERACTION WITH PML</scope>
</reference>
<reference key="31">
    <citation type="journal article" date="2009" name="Nature">
        <title>Telomerase modulates Wnt signalling by association with target gene chromatin.</title>
        <authorList>
            <person name="Park J.I."/>
            <person name="Venteicher A.S."/>
            <person name="Hong J.Y."/>
            <person name="Choi J."/>
            <person name="Jun S."/>
            <person name="Shkreli M."/>
            <person name="Chang W."/>
            <person name="Meng Z."/>
            <person name="Cheung P."/>
            <person name="Ji H."/>
            <person name="McLaughlin M."/>
            <person name="Veenstra T.D."/>
            <person name="Nusse R."/>
            <person name="McCrea P.D."/>
            <person name="Artandi S.E."/>
        </authorList>
    </citation>
    <scope>INTERACTION WITH SMARCA4</scope>
    <scope>FUNCTION</scope>
</reference>
<reference key="32">
    <citation type="journal article" date="2009" name="PLoS ONE">
        <title>Human telomerase reverse transcriptase (hTERT) Q169 is essential for telomerase function in vitro and in vivo.</title>
        <authorList>
            <person name="Wyatt H.D."/>
            <person name="Tsang A.R."/>
            <person name="Lobb D.A."/>
            <person name="Beattie T.L."/>
        </authorList>
    </citation>
    <scope>FUNCTION</scope>
    <scope>DNA-BINDING</scope>
    <scope>MUTAGENESIS OF GLN-169</scope>
</reference>
<reference key="33">
    <citation type="journal article" date="2009" name="Science">
        <title>A human telomerase holoenzyme protein required for Cajal body localization and telomere synthesis.</title>
        <authorList>
            <person name="Venteicher A.S."/>
            <person name="Abreu E.B."/>
            <person name="Meng Z."/>
            <person name="McCann K.E."/>
            <person name="Terns R.M."/>
            <person name="Veenstra T.D."/>
            <person name="Terns M.P."/>
            <person name="Artandi S.E."/>
        </authorList>
    </citation>
    <scope>IDENTIFICATION IN THE TELOMERASE HOLOENZYME COMPLEX</scope>
</reference>
<reference key="34">
    <citation type="journal article" date="2010" name="Mol. Cell. Biol.">
        <title>Specificity and stoichiometry of subunit interactions in the human telomerase holoenzyme assembled in vivo.</title>
        <authorList>
            <person name="Egan E.D."/>
            <person name="Collins K."/>
        </authorList>
    </citation>
    <scope>IDENTIFICATION IN THE TELOMERASE HOLOENZYME COMPLEX</scope>
</reference>
<reference key="35">
    <citation type="journal article" date="2011" name="Nucleic Acids Res.">
        <title>The DEAH-box RNA helicase RHAU binds an intramolecular RNA G-quadruplex in TERC and associates with telomerase holoenzyme.</title>
        <authorList>
            <person name="Lattmann S."/>
            <person name="Stadler M.B."/>
            <person name="Vaughn J.P."/>
            <person name="Akman S.A."/>
            <person name="Nagamine Y."/>
        </authorList>
    </citation>
    <scope>INTERACTION WITH DHX36</scope>
</reference>
<reference key="36">
    <citation type="journal article" date="2012" name="Biochem. Biophys. Res. Commun.">
        <title>The AAA-ATPase NVL2 is a telomerase component essential for holoenzyme assembly.</title>
        <authorList>
            <person name="Her J."/>
            <person name="Chung I.K."/>
        </authorList>
    </citation>
    <scope>SUBCELLULAR LOCATION</scope>
    <scope>INTERACTION WITH NVL</scope>
</reference>
<reference key="37">
    <citation type="journal article" date="2012" name="J. Cell Sci.">
        <title>Nuclear import of hTERT requires a bipartite nuclear localization signal and Akt-mediated phosphorylation.</title>
        <authorList>
            <person name="Chung J."/>
            <person name="Khadka P."/>
            <person name="Chung I.K."/>
        </authorList>
    </citation>
    <scope>PHOSPHORYLATION AT SER-227</scope>
    <scope>SUBCELLULAR LOCATION</scope>
    <scope>NUCLEAR LOCALIZATION SIGNAL</scope>
</reference>
<reference key="38">
    <citation type="journal article" date="2013" name="J. Biol. Chem.">
        <title>Dyrk2-associated EDD-DDB1-VprBP E3 ligase inhibits telomerase by TERT degradation.</title>
        <authorList>
            <person name="Jung H.Y."/>
            <person name="Wang X."/>
            <person name="Jun S."/>
            <person name="Park J.I."/>
        </authorList>
    </citation>
    <scope>PHOSPHORYLATION AT SER-457</scope>
    <scope>UBIQUITINATION</scope>
    <scope>MUTAGENESIS OF SER-457</scope>
</reference>
<reference key="39">
    <citation type="journal article" date="2013" name="J. Biol. Chem.">
        <title>HIV-1 Vpr protein inhibits telomerase activity via the EDD-DDB1-VPRBP E3 ligase complex.</title>
        <authorList>
            <person name="Wang X."/>
            <person name="Singh S."/>
            <person name="Jung H.Y."/>
            <person name="Yang G."/>
            <person name="Jun S."/>
            <person name="Sastry K.J."/>
            <person name="Park J.I."/>
        </authorList>
    </citation>
    <scope>UBIQUITINATION</scope>
</reference>
<reference key="40">
    <citation type="journal article" date="2013" name="Science">
        <title>TERT promoter mutations in familial and sporadic melanoma.</title>
        <authorList>
            <person name="Horn S."/>
            <person name="Figl A."/>
            <person name="Rachakonda P.S."/>
            <person name="Fischer C."/>
            <person name="Sucker A."/>
            <person name="Gast A."/>
            <person name="Kadel S."/>
            <person name="Moll I."/>
            <person name="Nagore E."/>
            <person name="Hemminki K."/>
            <person name="Schadendorf D."/>
            <person name="Kumar R."/>
        </authorList>
    </citation>
    <scope>INVOLVEMENT IN CMM9</scope>
</reference>
<reference key="41">
    <citation type="journal article" date="2018" name="Nucleic Acids Res.">
        <title>ATF7 mediates TNF-alpha-induced telomere shortening.</title>
        <authorList>
            <person name="Maekawa T."/>
            <person name="Liu B."/>
            <person name="Nakai D."/>
            <person name="Yoshida K."/>
            <person name="Nakamura K.I."/>
            <person name="Yasukawa M."/>
            <person name="Koike M."/>
            <person name="Takubo K."/>
            <person name="Chatton B."/>
            <person name="Ishikawa F."/>
            <person name="Masutomi K."/>
            <person name="Ishii S."/>
        </authorList>
    </citation>
    <scope>INTERACTION WITH ATF7</scope>
</reference>
<reference key="42">
    <citation type="journal article" date="2006" name="Eur. J. Immunol.">
        <title>Crystal structure of HLA-A*2402 complexed with a telomerase peptide.</title>
        <authorList>
            <person name="Cole D.K."/>
            <person name="Rizkallah P.J."/>
            <person name="Gao F."/>
            <person name="Watson N.I."/>
            <person name="Boulter J.M."/>
            <person name="Bell J.I."/>
            <person name="Sami M."/>
            <person name="Gao G.F."/>
            <person name="Jakobsen B.K."/>
        </authorList>
    </citation>
    <scope>X-RAY CRYSTALLOGRAPHY (2.8 ANGSTROMS) OF 461-469 IN COMPLEX WITH CLASS I MAJOR HISTOCOMPATIBILITY COMPLEX (MHC)</scope>
</reference>
<reference key="43">
    <citation type="journal article" date="2018" name="Nature">
        <title>Cryo-EM structure of substrate-bound human telomerase holoenzyme.</title>
        <authorList>
            <person name="Nguyen T.H.D."/>
            <person name="Tam J."/>
            <person name="Wu R.A."/>
            <person name="Greber B.J."/>
            <person name="Toso D."/>
            <person name="Nogales E."/>
            <person name="Collins K."/>
        </authorList>
    </citation>
    <scope>STRUCTURE BY ELECTRON MICROSCOPY (7.7 ANGSTROMS) OF THE TELOMERASE HOLOENZYME COMPLEX</scope>
    <scope>CATALYTIC ACTIVITY</scope>
</reference>
<reference key="44">
    <citation type="journal article" date="2005" name="Blood Cells Mol. Dis.">
        <title>Mutations in the reverse transcriptase component of telomerase (TERT) in patients with bone marrow failure.</title>
        <authorList>
            <person name="Vulliamy T.J."/>
            <person name="Walne A."/>
            <person name="Baskaradas A."/>
            <person name="Mason P.J."/>
            <person name="Marrone A."/>
            <person name="Dokal I."/>
        </authorList>
    </citation>
    <scope>VARIANT AA THR-202</scope>
    <scope>VARIANTS DKCA2 TRP-979 AND LEU-1127</scope>
    <scope>CHARACTERIZATION OF VARIANT AA THR-202</scope>
    <scope>CHARACTERIZATION OF VARIANTS DKCA2 TRP-979 AND LEU-1127</scope>
</reference>
<reference key="45">
    <citation type="journal article" date="2005" name="N. Engl. J. Med.">
        <title>Mutations in TERT, the gene for telomerase reverse transcriptase, in aplastic anemia.</title>
        <authorList>
            <person name="Yamaguchi H."/>
            <person name="Calado R.T."/>
            <person name="Ly H."/>
            <person name="Kajigaya S."/>
            <person name="Baerlocher G.M."/>
            <person name="Chanock S.J."/>
            <person name="Lansdorp P.M."/>
            <person name="Young N.S."/>
        </authorList>
    </citation>
    <scope>VARIANTS PFBMFT1 THR-202; TYR-412; MET-694; CYS-772 AND MET-1090</scope>
    <scope>VARIANTS THR-279; GLU-441 DEL AND THR-1062</scope>
</reference>
<reference key="46">
    <citation type="journal article" date="2005" name="Proc. Natl. Acad. Sci. U.S.A.">
        <title>Haploinsufficiency of telomerase reverse transcriptase leads to anticipation in autosomal dominant dyskeratosis congenita.</title>
        <authorList>
            <person name="Armanios M."/>
            <person name="Chen J.-L."/>
            <person name="Chang Y.-P.C."/>
            <person name="Brodsky R.A."/>
            <person name="Hawkins A."/>
            <person name="Griffin C.A."/>
            <person name="Eshleman J.R."/>
            <person name="Cohen A.R."/>
            <person name="Chakravarti A."/>
            <person name="Hamosh A."/>
            <person name="Greider C.W."/>
        </authorList>
    </citation>
    <scope>VARIANT DKCA2 ASN-902</scope>
    <scope>CHARACTERIZATION OF VARIANT DKCA2 ASN-902</scope>
</reference>
<reference key="47">
    <citation type="journal article" date="2006" name="Biochem. Biophys. Res. Commun.">
        <title>Coronary artery disease and a functional polymorphism of hTERT.</title>
        <authorList>
            <person name="Matsubara Y."/>
            <person name="Murata M."/>
            <person name="Watanabe K."/>
            <person name="Saito I."/>
            <person name="Miyaki K."/>
            <person name="Omae K."/>
            <person name="Ishikawa M."/>
            <person name="Matsushita K."/>
            <person name="Iwanaga S."/>
            <person name="Ogawa S."/>
            <person name="Ikeda Y."/>
        </authorList>
    </citation>
    <scope>INVOLVEMENT IN CAD SUSCEPTIBILITY</scope>
</reference>
<reference key="48">
    <citation type="journal article" date="2006" name="Blood">
        <title>Mutations in dyskeratosis congenita: their impact on telomere length and the diversity of clinical presentation.</title>
        <authorList>
            <person name="Vulliamy T.J."/>
            <person name="Marrone A."/>
            <person name="Knight S.W."/>
            <person name="Walne A."/>
            <person name="Mason P.J."/>
            <person name="Dokal I."/>
        </authorList>
    </citation>
    <scope>VARIANT DKCB4 ARG-721</scope>
</reference>
<reference key="49">
    <citation type="journal article" date="2006" name="Haematologica">
        <title>Mutations in telomerase catalytic protein in Japanese children with aplastic anemia.</title>
        <authorList>
            <person name="Liang J."/>
            <person name="Yagasaki H."/>
            <person name="Kamachi Y."/>
            <person name="Hama A."/>
            <person name="Matsumoto K."/>
            <person name="Kato K."/>
            <person name="Kudo K."/>
            <person name="Kojima S."/>
        </authorList>
    </citation>
    <scope>VARIANTS AA ASP-682 AND MET-726</scope>
    <scope>CHARACTERIZATION OF VARIANT AA MET-726</scope>
</reference>
<reference key="50">
    <citation type="journal article" date="2007" name="Blood">
        <title>Functional characterization of natural telomerase mutations found in patients with hematologic disorders.</title>
        <authorList>
            <person name="Xin Z.T."/>
            <person name="Beauchamp A.D."/>
            <person name="Calado R.T."/>
            <person name="Bradford J.W."/>
            <person name="Regal J.A."/>
            <person name="Shenoy A."/>
            <person name="Liang Y."/>
            <person name="Lansdorp P.M."/>
            <person name="Young N.S."/>
            <person name="Ly H."/>
        </authorList>
    </citation>
    <scope>VARIANT AA ASN-570</scope>
    <scope>CHARACTERIZATION OF VARIANTS ASN-570; ASP-682; ARG-721; MET-726; ASN-902; TRP-979 AND LEU-1127</scope>
</reference>
<reference key="51">
    <citation type="journal article" date="2007" name="Blood">
        <title>Telomerase reverse-transcriptase homozygous mutations in autosomal recessive dyskeratosis congenita and Hoyeraal-Hreidarsson syndrome.</title>
        <authorList>
            <person name="Marrone A."/>
            <person name="Walne A."/>
            <person name="Tamary H."/>
            <person name="Masunari Y."/>
            <person name="Kirwan M."/>
            <person name="Beswick R."/>
            <person name="Vulliamy T."/>
            <person name="Dokal I."/>
        </authorList>
    </citation>
    <scope>VARIANTS DKCB4 CYS-811 AND TRP-901</scope>
    <scope>CHARACTERIZATION OF VARIANTS DKCB4 CYS-811 AND TRP-901</scope>
</reference>
<reference key="52">
    <citation type="journal article" date="2007" name="N. Engl. J. Med.">
        <title>Telomerase mutations in families with idiopathic pulmonary fibrosis.</title>
        <authorList>
            <person name="Armanios M.Y."/>
            <person name="Chen J.J."/>
            <person name="Cogan J.D."/>
            <person name="Alder J.K."/>
            <person name="Ingersoll R.G."/>
            <person name="Markin C."/>
            <person name="Lawson W.E."/>
            <person name="Xie M."/>
            <person name="Vulto I."/>
            <person name="Phillips J.A."/>
            <person name="Lansdorp P.M."/>
            <person name="Greider C.W."/>
            <person name="Loyd J.E."/>
        </authorList>
    </citation>
    <scope>VARIANTS PFBMFT1 GLN-55 AND MET-1110</scope>
    <scope>CHARACTERIZATION OF VARIANTS PFBMFT1 GLN-55 AND MET-1110</scope>
</reference>
<reference key="53">
    <citation type="journal article" date="2007" name="Proc. Natl. Acad. Sci. U.S.A.">
        <title>Adult-onset pulmonary fibrosis caused by mutations in telomerase.</title>
        <authorList>
            <person name="Tsakiri K.D."/>
            <person name="Cronkhite J.T."/>
            <person name="Kuan P.J."/>
            <person name="Xing C."/>
            <person name="Raghu G."/>
            <person name="Weissler J.C."/>
            <person name="Rosenblatt R.L."/>
            <person name="Shay J.W."/>
            <person name="Garcia C.K."/>
        </authorList>
    </citation>
    <scope>VARIANT PFBMFT1 HIS-865</scope>
</reference>
<reference key="54">
    <citation type="journal article" date="2008" name="Blood">
        <title>Complex inheritance pattern of dyskeratosis congenita in two families with 2 different mutations in the telomerase reverse transcriptase gene.</title>
        <authorList>
            <person name="Du H.Y."/>
            <person name="Pumbo E."/>
            <person name="Manley P."/>
            <person name="Field J.J."/>
            <person name="Bayliss S.J."/>
            <person name="Wilson D.B."/>
            <person name="Mason P.J."/>
            <person name="Bessler M."/>
        </authorList>
    </citation>
    <scope>VARIANTS DKCB4 TYR-412 AND SER-704</scope>
    <scope>CHARACTERIZATION OF VARIANTS DKCB4 TYR-412 AND SER-704</scope>
</reference>
<reference key="55">
    <citation type="journal article" date="2009" name="Hum. Mutat.">
        <title>Defining the pathogenic role of telomerase mutations in myelodysplastic syndrome and acute myeloid leukemia.</title>
        <authorList>
            <person name="Kirwan M."/>
            <person name="Vulliamy T."/>
            <person name="Marrone A."/>
            <person name="Walne A.J."/>
            <person name="Beswick R."/>
            <person name="Hillmen P."/>
            <person name="Kelly R."/>
            <person name="Stewart A."/>
            <person name="Bowen D."/>
            <person name="Schonland S.O."/>
            <person name="Whittle A.M."/>
            <person name="McVerry A."/>
            <person name="Gilleece M."/>
            <person name="Dokal I."/>
        </authorList>
    </citation>
    <scope>VARIANTS ALA-65; MET-299; LYS-522 AND THR-1062</scope>
    <scope>VARIANTS AA THR-202; TYR-412; GLU-441 DEL; ASN-570; GLN-631; MET-694 AND LEU-785</scope>
</reference>
<reference key="56">
    <citation type="journal article" date="2009" name="Proc. Natl. Acad. Sci. U.S.A.">
        <title>Constitutional hypomorphic telomerase mutations in patients with acute myeloid leukemia.</title>
        <authorList>
            <person name="Calado R.T."/>
            <person name="Regal J.A."/>
            <person name="Hills M."/>
            <person name="Yewdell W.T."/>
            <person name="Dalmazzo L.F."/>
            <person name="Zago M.A."/>
            <person name="Lansdorp P.M."/>
            <person name="Hogge D."/>
            <person name="Chanock S.J."/>
            <person name="Estey E.H."/>
            <person name="Falcao R.P."/>
            <person name="Young N.S."/>
        </authorList>
    </citation>
    <scope>VARIANTS ALA-65; MET-299; TYR-412; GLU-441 DEL; LYS-522 AND THR-1062</scope>
</reference>
<reference key="57">
    <citation type="journal article" date="2011" name="Blood">
        <title>Syndrome complex of bone marrow failure and pulmonary fibrosis predicts germline defects in telomerase.</title>
        <authorList>
            <person name="Parry E.M."/>
            <person name="Alder J.K."/>
            <person name="Qi X."/>
            <person name="Chen J.J."/>
            <person name="Armanios M."/>
        </authorList>
    </citation>
    <scope>VARIANTS PFBMFT1 MET-170; THR-716; PHE-841; ARG-902 AND PHE-1025</scope>
    <scope>CHARACTERIZATION OF VARIANTS PFBMFT1 MET-170; THR-716; PHE-841 AND PHE-1025</scope>
</reference>
<reference key="58">
    <citation type="journal article" date="2011" name="Nature">
        <title>Telomere shortening and loss of self-renewal in dyskeratosis congenita induced pluripotent stem cells.</title>
        <authorList>
            <person name="Batista L.F."/>
            <person name="Pech M.F."/>
            <person name="Zhong F.L."/>
            <person name="Nguyen H.N."/>
            <person name="Xie K.T."/>
            <person name="Zaug A.J."/>
            <person name="Crary S.M."/>
            <person name="Choi J."/>
            <person name="Sebastiano V."/>
            <person name="Cherry A."/>
            <person name="Giri N."/>
            <person name="Wernig M."/>
            <person name="Alter B.P."/>
            <person name="Cech T.R."/>
            <person name="Savage S.A."/>
            <person name="Reijo Pera R.A."/>
            <person name="Artandi S.E."/>
        </authorList>
    </citation>
    <scope>VARIANT DKCB4 SER-704</scope>
    <scope>VARIANT DKCA2 TRP-979</scope>
    <scope>CHARACTERIZATION OF VARIANT DKCB4 SER-704</scope>
    <scope>CHARACTERIZATION OF VARIANT DKCA2 TRP-979</scope>
    <scope>CATALYTIC ACTIVITY</scope>
</reference>
<reference key="59">
    <citation type="journal article" date="2011" name="PLoS Genet.">
        <title>Ancestral mutation in telomerase causes defects in repeat addition processivity and manifests as familial pulmonary fibrosis.</title>
        <authorList>
            <person name="Alder J.K."/>
            <person name="Cogan J.D."/>
            <person name="Brown A.F."/>
            <person name="Anderson C.J."/>
            <person name="Lawson W.E."/>
            <person name="Lansdorp P.M."/>
            <person name="Phillips J.A. III"/>
            <person name="Loyd J.E."/>
            <person name="Chen J.J."/>
            <person name="Armanios M."/>
        </authorList>
    </citation>
    <scope>VARIANTS PFBMFT1 ILE-791 AND MET-867</scope>
    <scope>CHARACTERIZATION OF VARIANTS PFBMFT1 ILE-791 AND MET-867</scope>
</reference>
<reference key="60">
    <citation type="journal article" date="2012" name="N. Engl. J. Med.">
        <title>Pulmonary fibrosis, bone marrow failure, and telomerase mutation.</title>
        <authorList>
            <person name="Gansner J.M."/>
            <person name="Rosas I.O."/>
            <person name="Ebert B.L."/>
        </authorList>
    </citation>
    <scope>VARIANT PFBMFT1 LEU-923</scope>
</reference>
<reference key="61">
    <citation type="journal article" date="2019" name="Clin. Genet.">
        <title>FARSA mutations mimic phenylalanyl-tRNA synthetase deficiency caused by FARSB defects.</title>
        <authorList>
            <person name="Krenke K."/>
            <person name="Szczaluba K."/>
            <person name="Bielecka T."/>
            <person name="Rydzanicz M."/>
            <person name="Lange J."/>
            <person name="Koppolu A."/>
            <person name="Ploski R."/>
        </authorList>
    </citation>
    <scope>VARIANTS PRO-381 AND THR-1062</scope>
</reference>
<dbReference type="EC" id="2.7.7.49" evidence="37 45"/>
<dbReference type="EMBL" id="AF018167">
    <property type="protein sequence ID" value="AAC51724.1"/>
    <property type="molecule type" value="mRNA"/>
</dbReference>
<dbReference type="EMBL" id="AF015950">
    <property type="protein sequence ID" value="AAC51672.1"/>
    <property type="molecule type" value="mRNA"/>
</dbReference>
<dbReference type="EMBL" id="AF128894">
    <property type="protein sequence ID" value="AAD30037.1"/>
    <property type="molecule type" value="Genomic_DNA"/>
</dbReference>
<dbReference type="EMBL" id="AF128893">
    <property type="protein sequence ID" value="AAD30037.1"/>
    <property type="status" value="JOINED"/>
    <property type="molecule type" value="Genomic_DNA"/>
</dbReference>
<dbReference type="EMBL" id="AB085628">
    <property type="protein sequence ID" value="BAC11010.1"/>
    <property type="molecule type" value="mRNA"/>
</dbReference>
<dbReference type="EMBL" id="AB086379">
    <property type="protein sequence ID" value="BAC11014.1"/>
    <property type="molecule type" value="mRNA"/>
</dbReference>
<dbReference type="EMBL" id="AB086950">
    <property type="protein sequence ID" value="BAC11015.1"/>
    <property type="molecule type" value="mRNA"/>
</dbReference>
<dbReference type="EMBL" id="AY007685">
    <property type="protein sequence ID" value="AAG23289.1"/>
    <property type="molecule type" value="Genomic_DNA"/>
</dbReference>
<dbReference type="EMBL" id="DQ264729">
    <property type="protein sequence ID" value="ABB72674.1"/>
    <property type="molecule type" value="Genomic_DNA"/>
</dbReference>
<dbReference type="EMBL" id="AC114291">
    <property type="status" value="NOT_ANNOTATED_CDS"/>
    <property type="molecule type" value="Genomic_DNA"/>
</dbReference>
<dbReference type="EMBL" id="CH471102">
    <property type="protein sequence ID" value="EAX08167.1"/>
    <property type="molecule type" value="Genomic_DNA"/>
</dbReference>
<dbReference type="CCDS" id="CCDS3861.2">
    <molecule id="O14746-1"/>
</dbReference>
<dbReference type="CCDS" id="CCDS54831.1">
    <molecule id="O14746-3"/>
</dbReference>
<dbReference type="PIR" id="T03844">
    <property type="entry name" value="T03844"/>
</dbReference>
<dbReference type="RefSeq" id="NP_001180305.1">
    <molecule id="O14746-3"/>
    <property type="nucleotide sequence ID" value="NM_001193376.3"/>
</dbReference>
<dbReference type="RefSeq" id="NP_937983.2">
    <molecule id="O14746-1"/>
    <property type="nucleotide sequence ID" value="NM_198253.3"/>
</dbReference>
<dbReference type="PDB" id="2BCK">
    <property type="method" value="X-ray"/>
    <property type="resolution" value="2.80 A"/>
    <property type="chains" value="C/F=461-469"/>
</dbReference>
<dbReference type="PDB" id="4B18">
    <property type="method" value="X-ray"/>
    <property type="resolution" value="2.52 A"/>
    <property type="chains" value="B=222-240"/>
</dbReference>
<dbReference type="PDB" id="4MNQ">
    <property type="method" value="X-ray"/>
    <property type="resolution" value="2.74 A"/>
    <property type="chains" value="C=540-548"/>
</dbReference>
<dbReference type="PDB" id="5MEN">
    <property type="method" value="X-ray"/>
    <property type="resolution" value="2.81 A"/>
    <property type="chains" value="C=540-548"/>
</dbReference>
<dbReference type="PDB" id="5MEO">
    <property type="method" value="X-ray"/>
    <property type="resolution" value="1.77 A"/>
    <property type="chains" value="C=540-548"/>
</dbReference>
<dbReference type="PDB" id="5MEP">
    <property type="method" value="X-ray"/>
    <property type="resolution" value="2.71 A"/>
    <property type="chains" value="C/F=540-548"/>
</dbReference>
<dbReference type="PDB" id="5MEQ">
    <property type="method" value="X-ray"/>
    <property type="resolution" value="2.27 A"/>
    <property type="chains" value="C=540-546"/>
</dbReference>
<dbReference type="PDB" id="5MER">
    <property type="method" value="X-ray"/>
    <property type="resolution" value="1.88 A"/>
    <property type="chains" value="C/F=540-546"/>
</dbReference>
<dbReference type="PDB" id="5UGW">
    <property type="method" value="X-ray"/>
    <property type="resolution" value="2.31 A"/>
    <property type="chains" value="A=961-1132"/>
</dbReference>
<dbReference type="PDB" id="7BG9">
    <property type="method" value="EM"/>
    <property type="resolution" value="3.80 A"/>
    <property type="chains" value="A=1-1132"/>
</dbReference>
<dbReference type="PDB" id="7QXA">
    <property type="method" value="EM"/>
    <property type="resolution" value="3.20 A"/>
    <property type="chains" value="A=1-1132"/>
</dbReference>
<dbReference type="PDB" id="7QXB">
    <property type="method" value="EM"/>
    <property type="resolution" value="3.91 A"/>
    <property type="chains" value="A=1-1132"/>
</dbReference>
<dbReference type="PDB" id="7QXS">
    <property type="method" value="EM"/>
    <property type="resolution" value="3.91 A"/>
    <property type="chains" value="A=1-1132"/>
</dbReference>
<dbReference type="PDB" id="7TRD">
    <property type="method" value="EM"/>
    <property type="resolution" value="3.30 A"/>
    <property type="chains" value="A=1-1132"/>
</dbReference>
<dbReference type="PDB" id="7TRE">
    <property type="method" value="EM"/>
    <property type="resolution" value="3.50 A"/>
    <property type="chains" value="A=1-1132"/>
</dbReference>
<dbReference type="PDB" id="7TRF">
    <property type="method" value="EM"/>
    <property type="resolution" value="3.70 A"/>
    <property type="chains" value="A=1-1132"/>
</dbReference>
<dbReference type="PDB" id="7V99">
    <property type="method" value="EM"/>
    <property type="resolution" value="3.54 A"/>
    <property type="chains" value="A=1-1132"/>
</dbReference>
<dbReference type="PDBsum" id="2BCK"/>
<dbReference type="PDBsum" id="4B18"/>
<dbReference type="PDBsum" id="4MNQ"/>
<dbReference type="PDBsum" id="5MEN"/>
<dbReference type="PDBsum" id="5MEO"/>
<dbReference type="PDBsum" id="5MEP"/>
<dbReference type="PDBsum" id="5MEQ"/>
<dbReference type="PDBsum" id="5MER"/>
<dbReference type="PDBsum" id="5UGW"/>
<dbReference type="PDBsum" id="7BG9"/>
<dbReference type="PDBsum" id="7QXA"/>
<dbReference type="PDBsum" id="7QXB"/>
<dbReference type="PDBsum" id="7QXS"/>
<dbReference type="PDBsum" id="7TRD"/>
<dbReference type="PDBsum" id="7TRE"/>
<dbReference type="PDBsum" id="7TRF"/>
<dbReference type="PDBsum" id="7V99"/>
<dbReference type="EMDB" id="EMD-12174"/>
<dbReference type="EMDB" id="EMD-14196"/>
<dbReference type="EMDB" id="EMD-14197"/>
<dbReference type="EMDB" id="EMD-14198"/>
<dbReference type="EMDB" id="EMD-14199"/>
<dbReference type="EMDB" id="EMD-2310"/>
<dbReference type="EMDB" id="EMD-2311"/>
<dbReference type="EMDB" id="EMD-2312"/>
<dbReference type="EMDB" id="EMD-26086"/>
<dbReference type="EMDB" id="EMD-26087"/>
<dbReference type="EMDB" id="EMD-26088"/>
<dbReference type="EMDB" id="EMD-31811"/>
<dbReference type="EMDB" id="EMD-31812"/>
<dbReference type="SMR" id="O14746"/>
<dbReference type="BioGRID" id="112874">
    <property type="interactions" value="122"/>
</dbReference>
<dbReference type="ComplexPortal" id="CPX-17">
    <property type="entry name" value="Telomerase catalytic core complex"/>
</dbReference>
<dbReference type="ComplexPortal" id="CPX-20">
    <property type="entry name" value="TERT-RMRP complex"/>
</dbReference>
<dbReference type="ComplexPortal" id="CPX-265">
    <property type="entry name" value="Telomerase holoenzyme complex"/>
</dbReference>
<dbReference type="CORUM" id="O14746"/>
<dbReference type="DIP" id="DIP-40646N"/>
<dbReference type="ELM" id="O14746"/>
<dbReference type="FunCoup" id="O14746">
    <property type="interactions" value="326"/>
</dbReference>
<dbReference type="IntAct" id="O14746">
    <property type="interactions" value="27"/>
</dbReference>
<dbReference type="MINT" id="O14746"/>
<dbReference type="STRING" id="9606.ENSP00000309572"/>
<dbReference type="BindingDB" id="O14746"/>
<dbReference type="ChEMBL" id="CHEMBL2916"/>
<dbReference type="DrugBank" id="DB04115">
    <property type="generic name" value="Berberine"/>
</dbReference>
<dbReference type="DrugBank" id="DB00997">
    <property type="generic name" value="Doxorubicin"/>
</dbReference>
<dbReference type="DrugBank" id="DB17882">
    <property type="generic name" value="Epitalon"/>
</dbReference>
<dbReference type="DrugBank" id="DB00544">
    <property type="generic name" value="Fluorouracil"/>
</dbReference>
<dbReference type="DrugBank" id="DB05036">
    <property type="generic name" value="Grn163l"/>
</dbReference>
<dbReference type="DrugBank" id="DB14909">
    <property type="generic name" value="Imetelstat"/>
</dbReference>
<dbReference type="DrugBank" id="DB04728">
    <property type="generic name" value="Lividomycin A"/>
</dbReference>
<dbReference type="DrugBank" id="DB12747">
    <property type="generic name" value="Tertomotide"/>
</dbReference>
<dbReference type="DrugBank" id="DB00495">
    <property type="generic name" value="Zidovudine"/>
</dbReference>
<dbReference type="DrugCentral" id="O14746"/>
<dbReference type="GlyGen" id="O14746">
    <property type="glycosylation" value="2 sites, 1 O-linked glycan (1 site)"/>
</dbReference>
<dbReference type="iPTMnet" id="O14746"/>
<dbReference type="PhosphoSitePlus" id="O14746"/>
<dbReference type="BioMuta" id="TERT"/>
<dbReference type="jPOST" id="O14746"/>
<dbReference type="MassIVE" id="O14746"/>
<dbReference type="PaxDb" id="9606-ENSP00000309572"/>
<dbReference type="PeptideAtlas" id="O14746"/>
<dbReference type="ProteomicsDB" id="48203">
    <molecule id="O14746-1"/>
</dbReference>
<dbReference type="ProteomicsDB" id="48204">
    <molecule id="O14746-2"/>
</dbReference>
<dbReference type="ProteomicsDB" id="48205">
    <molecule id="O14746-3"/>
</dbReference>
<dbReference type="ProteomicsDB" id="73418"/>
<dbReference type="ABCD" id="O14746">
    <property type="antibodies" value="9 sequenced antibodies"/>
</dbReference>
<dbReference type="Antibodypedia" id="8998">
    <property type="antibodies" value="984 antibodies from 41 providers"/>
</dbReference>
<dbReference type="DNASU" id="7015"/>
<dbReference type="Ensembl" id="ENST00000310581.10">
    <molecule id="O14746-1"/>
    <property type="protein sequence ID" value="ENSP00000309572.5"/>
    <property type="gene ID" value="ENSG00000164362.21"/>
</dbReference>
<dbReference type="Ensembl" id="ENST00000334602.10">
    <molecule id="O14746-3"/>
    <property type="protein sequence ID" value="ENSP00000334346.6"/>
    <property type="gene ID" value="ENSG00000164362.21"/>
</dbReference>
<dbReference type="Ensembl" id="ENST00000460137.6">
    <molecule id="O14746-4"/>
    <property type="protein sequence ID" value="ENSP00000425003.1"/>
    <property type="gene ID" value="ENSG00000164362.21"/>
</dbReference>
<dbReference type="GeneID" id="7015"/>
<dbReference type="KEGG" id="hsa:7015"/>
<dbReference type="MANE-Select" id="ENST00000310581.10">
    <property type="protein sequence ID" value="ENSP00000309572.5"/>
    <property type="RefSeq nucleotide sequence ID" value="NM_198253.3"/>
    <property type="RefSeq protein sequence ID" value="NP_937983.2"/>
</dbReference>
<dbReference type="UCSC" id="uc003jcb.2">
    <molecule id="O14746-1"/>
    <property type="organism name" value="human"/>
</dbReference>
<dbReference type="AGR" id="HGNC:11730"/>
<dbReference type="CTD" id="7015"/>
<dbReference type="DisGeNET" id="7015"/>
<dbReference type="GeneCards" id="TERT"/>
<dbReference type="GeneReviews" id="TERT"/>
<dbReference type="HGNC" id="HGNC:11730">
    <property type="gene designation" value="TERT"/>
</dbReference>
<dbReference type="HPA" id="ENSG00000164362">
    <property type="expression patterns" value="Not detected"/>
</dbReference>
<dbReference type="MalaCards" id="TERT"/>
<dbReference type="MIM" id="187270">
    <property type="type" value="gene"/>
</dbReference>
<dbReference type="MIM" id="609135">
    <property type="type" value="phenotype"/>
</dbReference>
<dbReference type="MIM" id="613989">
    <property type="type" value="phenotype"/>
</dbReference>
<dbReference type="MIM" id="614742">
    <property type="type" value="phenotype"/>
</dbReference>
<dbReference type="MIM" id="615134">
    <property type="type" value="phenotype"/>
</dbReference>
<dbReference type="neXtProt" id="NX_O14746"/>
<dbReference type="OpenTargets" id="ENSG00000164362"/>
<dbReference type="Orphanet" id="1501">
    <property type="disease" value="Adrenocortical carcinoma"/>
</dbReference>
<dbReference type="Orphanet" id="457246">
    <property type="disease" value="Clear cell sarcoma of kidney"/>
</dbReference>
<dbReference type="Orphanet" id="146">
    <property type="disease" value="Differentiated thyroid carcinoma"/>
</dbReference>
<dbReference type="Orphanet" id="1775">
    <property type="disease" value="Dyskeratosis congenita"/>
</dbReference>
<dbReference type="Orphanet" id="618">
    <property type="disease" value="Familial melanoma"/>
</dbReference>
<dbReference type="Orphanet" id="3322">
    <property type="disease" value="Hoyeraal-Hreidarsson syndrome"/>
</dbReference>
<dbReference type="Orphanet" id="88">
    <property type="disease" value="Idiopathic aplastic anemia"/>
</dbReference>
<dbReference type="Orphanet" id="2032">
    <property type="disease" value="Idiopathic pulmonary fibrosis"/>
</dbReference>
<dbReference type="Orphanet" id="2495">
    <property type="disease" value="Meningioma"/>
</dbReference>
<dbReference type="PharmGKB" id="PA36447"/>
<dbReference type="VEuPathDB" id="HostDB:ENSG00000164362"/>
<dbReference type="eggNOG" id="KOG1005">
    <property type="taxonomic scope" value="Eukaryota"/>
</dbReference>
<dbReference type="GeneTree" id="ENSGT00390000018531"/>
<dbReference type="HOGENOM" id="CLU_001996_2_0_1"/>
<dbReference type="InParanoid" id="O14746"/>
<dbReference type="OMA" id="SYKAVQW"/>
<dbReference type="OrthoDB" id="289721at2759"/>
<dbReference type="PAN-GO" id="O14746">
    <property type="GO annotations" value="5 GO annotations based on evolutionary models"/>
</dbReference>
<dbReference type="PhylomeDB" id="O14746"/>
<dbReference type="TreeFam" id="TF329048"/>
<dbReference type="PathwayCommons" id="O14746"/>
<dbReference type="Reactome" id="R-HSA-171319">
    <property type="pathway name" value="Telomere Extension By Telomerase"/>
</dbReference>
<dbReference type="Reactome" id="R-HSA-201722">
    <property type="pathway name" value="Formation of the beta-catenin:TCF transactivating complex"/>
</dbReference>
<dbReference type="Reactome" id="R-HSA-9825895">
    <property type="pathway name" value="Regulation of MITF-M-dependent genes involved in DNA replication, damage repair and senescence"/>
</dbReference>
<dbReference type="SignaLink" id="O14746"/>
<dbReference type="SIGNOR" id="O14746"/>
<dbReference type="BioGRID-ORCS" id="7015">
    <property type="hits" value="25 hits in 1168 CRISPR screens"/>
</dbReference>
<dbReference type="CD-CODE" id="6F24707C">
    <property type="entry name" value="Cajal body"/>
</dbReference>
<dbReference type="CD-CODE" id="91857CE7">
    <property type="entry name" value="Nucleolus"/>
</dbReference>
<dbReference type="CD-CODE" id="DEE660B4">
    <property type="entry name" value="Stress granule"/>
</dbReference>
<dbReference type="EvolutionaryTrace" id="O14746"/>
<dbReference type="GeneWiki" id="Telomerase_reverse_transcriptase"/>
<dbReference type="GenomeRNAi" id="7015"/>
<dbReference type="Pharos" id="O14746">
    <property type="development level" value="Tchem"/>
</dbReference>
<dbReference type="PRO" id="PR:O14746"/>
<dbReference type="Proteomes" id="UP000005640">
    <property type="component" value="Chromosome 5"/>
</dbReference>
<dbReference type="RNAct" id="O14746">
    <property type="molecule type" value="protein"/>
</dbReference>
<dbReference type="Bgee" id="ENSG00000164362">
    <property type="expression patterns" value="Expressed in stromal cell of endometrium and 90 other cell types or tissues"/>
</dbReference>
<dbReference type="ExpressionAtlas" id="O14746">
    <property type="expression patterns" value="baseline and differential"/>
</dbReference>
<dbReference type="GO" id="GO:0000781">
    <property type="term" value="C:chromosome, telomeric region"/>
    <property type="evidence" value="ECO:0000314"/>
    <property type="project" value="BHF-UCL"/>
</dbReference>
<dbReference type="GO" id="GO:0005829">
    <property type="term" value="C:cytosol"/>
    <property type="evidence" value="ECO:0000314"/>
    <property type="project" value="HPA"/>
</dbReference>
<dbReference type="GO" id="GO:0042645">
    <property type="term" value="C:mitochondrial nucleoid"/>
    <property type="evidence" value="ECO:0000314"/>
    <property type="project" value="BHF-UCL"/>
</dbReference>
<dbReference type="GO" id="GO:0016607">
    <property type="term" value="C:nuclear speck"/>
    <property type="evidence" value="ECO:0000314"/>
    <property type="project" value="HPA"/>
</dbReference>
<dbReference type="GO" id="GO:0000783">
    <property type="term" value="C:nuclear telomere cap complex"/>
    <property type="evidence" value="ECO:0000305"/>
    <property type="project" value="BHF-UCL"/>
</dbReference>
<dbReference type="GO" id="GO:0005730">
    <property type="term" value="C:nucleolus"/>
    <property type="evidence" value="ECO:0000314"/>
    <property type="project" value="UniProtKB"/>
</dbReference>
<dbReference type="GO" id="GO:0005654">
    <property type="term" value="C:nucleoplasm"/>
    <property type="evidence" value="ECO:0000314"/>
    <property type="project" value="HPA"/>
</dbReference>
<dbReference type="GO" id="GO:0005634">
    <property type="term" value="C:nucleus"/>
    <property type="evidence" value="ECO:0000314"/>
    <property type="project" value="BHF-UCL"/>
</dbReference>
<dbReference type="GO" id="GO:0005886">
    <property type="term" value="C:plasma membrane"/>
    <property type="evidence" value="ECO:0007669"/>
    <property type="project" value="Ensembl"/>
</dbReference>
<dbReference type="GO" id="GO:0016605">
    <property type="term" value="C:PML body"/>
    <property type="evidence" value="ECO:0007669"/>
    <property type="project" value="UniProtKB-SubCell"/>
</dbReference>
<dbReference type="GO" id="GO:0031379">
    <property type="term" value="C:RNA-directed RNA polymerase complex"/>
    <property type="evidence" value="ECO:0000353"/>
    <property type="project" value="BHF-UCL"/>
</dbReference>
<dbReference type="GO" id="GO:0000333">
    <property type="term" value="C:telomerase catalytic core complex"/>
    <property type="evidence" value="ECO:0000314"/>
    <property type="project" value="BHF-UCL"/>
</dbReference>
<dbReference type="GO" id="GO:0005697">
    <property type="term" value="C:telomerase holoenzyme complex"/>
    <property type="evidence" value="ECO:0000314"/>
    <property type="project" value="UniProtKB"/>
</dbReference>
<dbReference type="GO" id="GO:1990572">
    <property type="term" value="C:TERT-RMRP complex"/>
    <property type="evidence" value="ECO:0000314"/>
    <property type="project" value="BHF-UCL"/>
</dbReference>
<dbReference type="GO" id="GO:0003677">
    <property type="term" value="F:DNA binding"/>
    <property type="evidence" value="ECO:0000314"/>
    <property type="project" value="BHF-UCL"/>
</dbReference>
<dbReference type="GO" id="GO:0042802">
    <property type="term" value="F:identical protein binding"/>
    <property type="evidence" value="ECO:0000353"/>
    <property type="project" value="IntAct"/>
</dbReference>
<dbReference type="GO" id="GO:0046872">
    <property type="term" value="F:metal ion binding"/>
    <property type="evidence" value="ECO:0007669"/>
    <property type="project" value="UniProtKB-KW"/>
</dbReference>
<dbReference type="GO" id="GO:0042803">
    <property type="term" value="F:protein homodimerization activity"/>
    <property type="evidence" value="ECO:0000314"/>
    <property type="project" value="BHF-UCL"/>
</dbReference>
<dbReference type="GO" id="GO:0051087">
    <property type="term" value="F:protein-folding chaperone binding"/>
    <property type="evidence" value="ECO:0000353"/>
    <property type="project" value="BHF-UCL"/>
</dbReference>
<dbReference type="GO" id="GO:0003723">
    <property type="term" value="F:RNA binding"/>
    <property type="evidence" value="ECO:0000353"/>
    <property type="project" value="BHF-UCL"/>
</dbReference>
<dbReference type="GO" id="GO:0003964">
    <property type="term" value="F:RNA-directed DNA polymerase activity"/>
    <property type="evidence" value="ECO:0000314"/>
    <property type="project" value="BHF-UCL"/>
</dbReference>
<dbReference type="GO" id="GO:0003968">
    <property type="term" value="F:RNA-directed RNA polymerase activity"/>
    <property type="evidence" value="ECO:0000314"/>
    <property type="project" value="BHF-UCL"/>
</dbReference>
<dbReference type="GO" id="GO:0003720">
    <property type="term" value="F:telomerase activity"/>
    <property type="evidence" value="ECO:0000314"/>
    <property type="project" value="UniProtKB"/>
</dbReference>
<dbReference type="GO" id="GO:0070034">
    <property type="term" value="F:telomerase RNA binding"/>
    <property type="evidence" value="ECO:0000314"/>
    <property type="project" value="BHF-UCL"/>
</dbReference>
<dbReference type="GO" id="GO:0042162">
    <property type="term" value="F:telomeric DNA binding"/>
    <property type="evidence" value="ECO:0000318"/>
    <property type="project" value="GO_Central"/>
</dbReference>
<dbReference type="GO" id="GO:0098680">
    <property type="term" value="F:template-free RNA nucleotidyltransferase"/>
    <property type="evidence" value="ECO:0000314"/>
    <property type="project" value="BHF-UCL"/>
</dbReference>
<dbReference type="GO" id="GO:0001223">
    <property type="term" value="F:transcription coactivator binding"/>
    <property type="evidence" value="ECO:0000353"/>
    <property type="project" value="BHF-UCL"/>
</dbReference>
<dbReference type="GO" id="GO:0000049">
    <property type="term" value="F:tRNA binding"/>
    <property type="evidence" value="ECO:0000314"/>
    <property type="project" value="BHF-UCL"/>
</dbReference>
<dbReference type="GO" id="GO:0071456">
    <property type="term" value="P:cellular response to hypoxia"/>
    <property type="evidence" value="ECO:0000315"/>
    <property type="project" value="BHF-UCL"/>
</dbReference>
<dbReference type="GO" id="GO:0071897">
    <property type="term" value="P:DNA biosynthetic process"/>
    <property type="evidence" value="ECO:0000314"/>
    <property type="project" value="BHF-UCL"/>
</dbReference>
<dbReference type="GO" id="GO:0022616">
    <property type="term" value="P:DNA strand elongation"/>
    <property type="evidence" value="ECO:0000314"/>
    <property type="project" value="BHF-UCL"/>
</dbReference>
<dbReference type="GO" id="GO:0070200">
    <property type="term" value="P:establishment of protein localization to telomere"/>
    <property type="evidence" value="ECO:0000314"/>
    <property type="project" value="BHF-UCL"/>
</dbReference>
<dbReference type="GO" id="GO:0007507">
    <property type="term" value="P:heart development"/>
    <property type="evidence" value="ECO:0007669"/>
    <property type="project" value="Ensembl"/>
</dbReference>
<dbReference type="GO" id="GO:0007005">
    <property type="term" value="P:mitochondrion organization"/>
    <property type="evidence" value="ECO:0000314"/>
    <property type="project" value="BHF-UCL"/>
</dbReference>
<dbReference type="GO" id="GO:2000773">
    <property type="term" value="P:negative regulation of cellular senescence"/>
    <property type="evidence" value="ECO:0000314"/>
    <property type="project" value="BHF-UCL"/>
</dbReference>
<dbReference type="GO" id="GO:2000352">
    <property type="term" value="P:negative regulation of endothelial cell apoptotic process"/>
    <property type="evidence" value="ECO:0007669"/>
    <property type="project" value="Ensembl"/>
</dbReference>
<dbReference type="GO" id="GO:2001240">
    <property type="term" value="P:negative regulation of extrinsic apoptotic signaling pathway in absence of ligand"/>
    <property type="evidence" value="ECO:0000315"/>
    <property type="project" value="BHF-UCL"/>
</dbReference>
<dbReference type="GO" id="GO:0043524">
    <property type="term" value="P:negative regulation of neuron apoptotic process"/>
    <property type="evidence" value="ECO:0007669"/>
    <property type="project" value="Ensembl"/>
</dbReference>
<dbReference type="GO" id="GO:0045766">
    <property type="term" value="P:positive regulation of angiogenesis"/>
    <property type="evidence" value="ECO:0007669"/>
    <property type="project" value="Ensembl"/>
</dbReference>
<dbReference type="GO" id="GO:0046326">
    <property type="term" value="P:positive regulation of D-glucose import"/>
    <property type="evidence" value="ECO:0007669"/>
    <property type="project" value="Ensembl"/>
</dbReference>
<dbReference type="GO" id="GO:1900087">
    <property type="term" value="P:positive regulation of G1/S transition of mitotic cell cycle"/>
    <property type="evidence" value="ECO:0007669"/>
    <property type="project" value="Ensembl"/>
</dbReference>
<dbReference type="GO" id="GO:0042635">
    <property type="term" value="P:positive regulation of hair cycle"/>
    <property type="evidence" value="ECO:0000250"/>
    <property type="project" value="BHF-UCL"/>
</dbReference>
<dbReference type="GO" id="GO:1902895">
    <property type="term" value="P:positive regulation of miRNA transcription"/>
    <property type="evidence" value="ECO:0000315"/>
    <property type="project" value="BHF-UCL"/>
</dbReference>
<dbReference type="GO" id="GO:0032092">
    <property type="term" value="P:positive regulation of protein binding"/>
    <property type="evidence" value="ECO:0000314"/>
    <property type="project" value="BHF-UCL"/>
</dbReference>
<dbReference type="GO" id="GO:1904751">
    <property type="term" value="P:positive regulation of protein localization to nucleolus"/>
    <property type="evidence" value="ECO:0000314"/>
    <property type="project" value="BHF-UCL"/>
</dbReference>
<dbReference type="GO" id="GO:2000648">
    <property type="term" value="P:positive regulation of stem cell proliferation"/>
    <property type="evidence" value="ECO:0000250"/>
    <property type="project" value="BHF-UCL"/>
</dbReference>
<dbReference type="GO" id="GO:1903620">
    <property type="term" value="P:positive regulation of transdifferentiation"/>
    <property type="evidence" value="ECO:0007669"/>
    <property type="project" value="Ensembl"/>
</dbReference>
<dbReference type="GO" id="GO:1904754">
    <property type="term" value="P:positive regulation of vascular associated smooth muscle cell migration"/>
    <property type="evidence" value="ECO:0007669"/>
    <property type="project" value="Ensembl"/>
</dbReference>
<dbReference type="GO" id="GO:1904707">
    <property type="term" value="P:positive regulation of vascular associated smooth muscle cell proliferation"/>
    <property type="evidence" value="ECO:0007669"/>
    <property type="project" value="Ensembl"/>
</dbReference>
<dbReference type="GO" id="GO:0030177">
    <property type="term" value="P:positive regulation of Wnt signaling pathway"/>
    <property type="evidence" value="ECO:0000316"/>
    <property type="project" value="BHF-UCL"/>
</dbReference>
<dbReference type="GO" id="GO:0006606">
    <property type="term" value="P:protein import into nucleus"/>
    <property type="evidence" value="ECO:0000315"/>
    <property type="project" value="DisProt"/>
</dbReference>
<dbReference type="GO" id="GO:0031647">
    <property type="term" value="P:regulation of protein stability"/>
    <property type="evidence" value="ECO:0000314"/>
    <property type="project" value="BHF-UCL"/>
</dbReference>
<dbReference type="GO" id="GO:0090399">
    <property type="term" value="P:replicative senescence"/>
    <property type="evidence" value="ECO:0000315"/>
    <property type="project" value="BHF-UCL"/>
</dbReference>
<dbReference type="GO" id="GO:0046686">
    <property type="term" value="P:response to cadmium ion"/>
    <property type="evidence" value="ECO:0007669"/>
    <property type="project" value="Ensembl"/>
</dbReference>
<dbReference type="GO" id="GO:0006278">
    <property type="term" value="P:RNA-templated DNA biosynthetic process"/>
    <property type="evidence" value="ECO:0000314"/>
    <property type="project" value="BHF-UCL"/>
</dbReference>
<dbReference type="GO" id="GO:0001172">
    <property type="term" value="P:RNA-templated transcription"/>
    <property type="evidence" value="ECO:0000314"/>
    <property type="project" value="BHF-UCL"/>
</dbReference>
<dbReference type="GO" id="GO:0030422">
    <property type="term" value="P:siRNA processing"/>
    <property type="evidence" value="ECO:0000314"/>
    <property type="project" value="BHF-UCL"/>
</dbReference>
<dbReference type="GO" id="GO:0140745">
    <property type="term" value="P:siRNA transcription"/>
    <property type="evidence" value="ECO:0000314"/>
    <property type="project" value="BHF-UCL"/>
</dbReference>
<dbReference type="GO" id="GO:0000723">
    <property type="term" value="P:telomere maintenance"/>
    <property type="evidence" value="ECO:0000304"/>
    <property type="project" value="UniProtKB"/>
</dbReference>
<dbReference type="GO" id="GO:0000722">
    <property type="term" value="P:telomere maintenance via recombination"/>
    <property type="evidence" value="ECO:0000303"/>
    <property type="project" value="ComplexPortal"/>
</dbReference>
<dbReference type="GO" id="GO:0007004">
    <property type="term" value="P:telomere maintenance via telomerase"/>
    <property type="evidence" value="ECO:0000314"/>
    <property type="project" value="UniProtKB"/>
</dbReference>
<dbReference type="CDD" id="cd01648">
    <property type="entry name" value="TERT"/>
    <property type="match status" value="1"/>
</dbReference>
<dbReference type="FunFam" id="1.10.132.70:FF:000001">
    <property type="entry name" value="Telomerase reverse transcriptase"/>
    <property type="match status" value="1"/>
</dbReference>
<dbReference type="FunFam" id="1.10.357.90:FF:000001">
    <property type="entry name" value="Telomerase reverse transcriptase"/>
    <property type="match status" value="1"/>
</dbReference>
<dbReference type="FunFam" id="3.30.70.2630:FF:000001">
    <property type="entry name" value="Telomerase reverse transcriptase"/>
    <property type="match status" value="1"/>
</dbReference>
<dbReference type="Gene3D" id="1.10.132.70">
    <property type="match status" value="1"/>
</dbReference>
<dbReference type="Gene3D" id="1.10.357.90">
    <property type="match status" value="1"/>
</dbReference>
<dbReference type="Gene3D" id="3.30.70.2630">
    <property type="match status" value="1"/>
</dbReference>
<dbReference type="IDEAL" id="IID00690"/>
<dbReference type="InterPro" id="IPR043502">
    <property type="entry name" value="DNA/RNA_pol_sf"/>
</dbReference>
<dbReference type="InterPro" id="IPR000477">
    <property type="entry name" value="RT_dom"/>
</dbReference>
<dbReference type="InterPro" id="IPR021891">
    <property type="entry name" value="Telomerase_RBD"/>
</dbReference>
<dbReference type="InterPro" id="IPR003545">
    <property type="entry name" value="Telomerase_RT"/>
</dbReference>
<dbReference type="InterPro" id="IPR049139">
    <property type="entry name" value="TERT_C"/>
</dbReference>
<dbReference type="PANTHER" id="PTHR12066">
    <property type="entry name" value="TELOMERASE REVERSE TRANSCRIPTASE"/>
    <property type="match status" value="1"/>
</dbReference>
<dbReference type="PANTHER" id="PTHR12066:SF0">
    <property type="entry name" value="TELOMERASE REVERSE TRANSCRIPTASE"/>
    <property type="match status" value="1"/>
</dbReference>
<dbReference type="Pfam" id="PF00078">
    <property type="entry name" value="RVT_1"/>
    <property type="match status" value="1"/>
</dbReference>
<dbReference type="Pfam" id="PF12009">
    <property type="entry name" value="Telomerase_RBD"/>
    <property type="match status" value="1"/>
</dbReference>
<dbReference type="Pfam" id="PF21399">
    <property type="entry name" value="TERT_C"/>
    <property type="match status" value="1"/>
</dbReference>
<dbReference type="PRINTS" id="PR01365">
    <property type="entry name" value="TELOMERASERT"/>
</dbReference>
<dbReference type="SMART" id="SM00975">
    <property type="entry name" value="Telomerase_RBD"/>
    <property type="match status" value="1"/>
</dbReference>
<dbReference type="SUPFAM" id="SSF56672">
    <property type="entry name" value="DNA/RNA polymerases"/>
    <property type="match status" value="1"/>
</dbReference>
<dbReference type="PROSITE" id="PS50878">
    <property type="entry name" value="RT_POL"/>
    <property type="match status" value="1"/>
</dbReference>
<accession>O14746</accession>
<accession>O14783</accession>
<accession>Q2XS35</accession>
<accession>Q8N6C3</accession>
<accession>Q8NG38</accession>
<accession>Q8NG46</accession>
<sequence length="1132" mass="126997">MPRAPRCRAVRSLLRSHYREVLPLATFVRRLGPQGWRLVQRGDPAAFRALVAQCLVCVPWDARPPPAAPSFRQVSCLKELVARVLQRLCERGAKNVLAFGFALLDGARGGPPEAFTTSVRSYLPNTVTDALRGSGAWGLLLRRVGDDVLVHLLARCALFVLVAPSCAYQVCGPPLYQLGAATQARPPPHASGPRRRLGCERAWNHSVREAGVPLGLPAPGARRRGGSASRSLPLPKRPRRGAAPEPERTPVGQGSWAHPGRTRGPSDRGFCVVSPARPAEEATSLEGALSGTRHSHPSVGRQHHAGPPSTSRPPRPWDTPCPPVYAETKHFLYSSGDKEQLRPSFLLSSLRPSLTGARRLVETIFLGSRPWMPGTPRRLPRLPQRYWQMRPLFLELLGNHAQCPYGVLLKTHCPLRAAVTPAAGVCAREKPQGSVAAPEEEDTDPRRLVQLLRQHSSPWQVYGFVRACLRRLVPPGLWGSRHNERRFLRNTKKFISLGKHAKLSLQELTWKMSVRDCAWLRRSPGVGCVPAAEHRLREEILAKFLHWLMSVYVVELLRSFFYVTETTFQKNRLFFYRKSVWSKLQSIGIRQHLKRVQLRELSEAEVRQHREARPALLTSRLRFIPKPDGLRPIVNMDYVVGARTFRREKRAERLTSRVKALFSVLNYERARRPGLLGASVLGLDDIHRAWRTFVLRVRAQDPPPELYFVKVDVTGAYDTIPQDRLTEVIASIIKPQNTYCVRRYAVVQKAAHGHVRKAFKSHVSTLTDLQPYMRQFVAHLQETSPLRDAVVIEQSSSLNEASSGLFDVFLRFMCHHAVRIRGKSYVQCQGIPQGSILSTLLCSLCYGDMENKLFAGIRRDGLLLRLVDDFLLVTPHLTHAKTFLRTLVRGVPEYGCVVNLRKTVVNFPVEDEALGGTAFVQMPAHGLFPWCGLLLDTRTLEVQSDYSSYARTSIRASLTFNRGFKAGRNMRRKLFGVLRLKCHSLFLDLQVNSLQTVCTNIYKILLLQAYRFHACVLQLPFHQQVWKNPTFFLRVISDTASLCYSILKAKNAGMSLGAKGAAGPLPSEAVQWLCHQAFLLKLTRHRVTYVPLLGSLRTAQTQLSRKLPGTTLTALEAAANPALPSDFKTILD</sequence>
<evidence type="ECO:0000250" key="1">
    <source>
        <dbReference type="UniProtKB" id="O70372"/>
    </source>
</evidence>
<evidence type="ECO:0000250" key="2">
    <source>
        <dbReference type="UniProtKB" id="Q4KTA7"/>
    </source>
</evidence>
<evidence type="ECO:0000255" key="3">
    <source>
        <dbReference type="PROSITE-ProRule" id="PRU00405"/>
    </source>
</evidence>
<evidence type="ECO:0000256" key="4">
    <source>
        <dbReference type="SAM" id="MobiDB-lite"/>
    </source>
</evidence>
<evidence type="ECO:0000269" key="5">
    <source>
    </source>
</evidence>
<evidence type="ECO:0000269" key="6">
    <source>
    </source>
</evidence>
<evidence type="ECO:0000269" key="7">
    <source>
    </source>
</evidence>
<evidence type="ECO:0000269" key="8">
    <source>
    </source>
</evidence>
<evidence type="ECO:0000269" key="9">
    <source>
    </source>
</evidence>
<evidence type="ECO:0000269" key="10">
    <source>
    </source>
</evidence>
<evidence type="ECO:0000269" key="11">
    <source>
    </source>
</evidence>
<evidence type="ECO:0000269" key="12">
    <source>
    </source>
</evidence>
<evidence type="ECO:0000269" key="13">
    <source>
    </source>
</evidence>
<evidence type="ECO:0000269" key="14">
    <source>
    </source>
</evidence>
<evidence type="ECO:0000269" key="15">
    <source>
    </source>
</evidence>
<evidence type="ECO:0000269" key="16">
    <source>
    </source>
</evidence>
<evidence type="ECO:0000269" key="17">
    <source>
    </source>
</evidence>
<evidence type="ECO:0000269" key="18">
    <source>
    </source>
</evidence>
<evidence type="ECO:0000269" key="19">
    <source>
    </source>
</evidence>
<evidence type="ECO:0000269" key="20">
    <source>
    </source>
</evidence>
<evidence type="ECO:0000269" key="21">
    <source>
    </source>
</evidence>
<evidence type="ECO:0000269" key="22">
    <source>
    </source>
</evidence>
<evidence type="ECO:0000269" key="23">
    <source>
    </source>
</evidence>
<evidence type="ECO:0000269" key="24">
    <source>
    </source>
</evidence>
<evidence type="ECO:0000269" key="25">
    <source>
    </source>
</evidence>
<evidence type="ECO:0000269" key="26">
    <source>
    </source>
</evidence>
<evidence type="ECO:0000269" key="27">
    <source>
    </source>
</evidence>
<evidence type="ECO:0000269" key="28">
    <source>
    </source>
</evidence>
<evidence type="ECO:0000269" key="29">
    <source>
    </source>
</evidence>
<evidence type="ECO:0000269" key="30">
    <source>
    </source>
</evidence>
<evidence type="ECO:0000269" key="31">
    <source>
    </source>
</evidence>
<evidence type="ECO:0000269" key="32">
    <source>
    </source>
</evidence>
<evidence type="ECO:0000269" key="33">
    <source>
    </source>
</evidence>
<evidence type="ECO:0000269" key="34">
    <source>
    </source>
</evidence>
<evidence type="ECO:0000269" key="35">
    <source>
    </source>
</evidence>
<evidence type="ECO:0000269" key="36">
    <source>
    </source>
</evidence>
<evidence type="ECO:0000269" key="37">
    <source>
    </source>
</evidence>
<evidence type="ECO:0000269" key="38">
    <source>
    </source>
</evidence>
<evidence type="ECO:0000269" key="39">
    <source>
    </source>
</evidence>
<evidence type="ECO:0000269" key="40">
    <source>
    </source>
</evidence>
<evidence type="ECO:0000269" key="41">
    <source>
    </source>
</evidence>
<evidence type="ECO:0000269" key="42">
    <source>
    </source>
</evidence>
<evidence type="ECO:0000269" key="43">
    <source>
    </source>
</evidence>
<evidence type="ECO:0000269" key="44">
    <source>
    </source>
</evidence>
<evidence type="ECO:0000269" key="45">
    <source>
    </source>
</evidence>
<evidence type="ECO:0000269" key="46">
    <source>
    </source>
</evidence>
<evidence type="ECO:0000269" key="47">
    <source>
    </source>
</evidence>
<evidence type="ECO:0000269" key="48">
    <source>
    </source>
</evidence>
<evidence type="ECO:0000269" key="49">
    <source>
    </source>
</evidence>
<evidence type="ECO:0000269" key="50">
    <source ref="7"/>
</evidence>
<evidence type="ECO:0000303" key="51">
    <source>
    </source>
</evidence>
<evidence type="ECO:0000303" key="52">
    <source>
    </source>
</evidence>
<evidence type="ECO:0000305" key="53"/>
<evidence type="ECO:0007829" key="54">
    <source>
        <dbReference type="PDB" id="5UGW"/>
    </source>
</evidence>
<evidence type="ECO:0007829" key="55">
    <source>
        <dbReference type="PDB" id="7QXA"/>
    </source>
</evidence>
<evidence type="ECO:0007829" key="56">
    <source>
        <dbReference type="PDB" id="7TRD"/>
    </source>
</evidence>
<evidence type="ECO:0007829" key="57">
    <source>
        <dbReference type="PDB" id="7TRE"/>
    </source>
</evidence>
<proteinExistence type="evidence at protein level"/>
<protein>
    <recommendedName>
        <fullName>Telomerase reverse transcriptase</fullName>
        <ecNumber evidence="37 45">2.7.7.49</ecNumber>
    </recommendedName>
    <alternativeName>
        <fullName>HEST2</fullName>
    </alternativeName>
    <alternativeName>
        <fullName>Telomerase catalytic subunit</fullName>
    </alternativeName>
    <alternativeName>
        <fullName>Telomerase-associated protein 2</fullName>
        <shortName>TP2</shortName>
    </alternativeName>
</protein>
<organism>
    <name type="scientific">Homo sapiens</name>
    <name type="common">Human</name>
    <dbReference type="NCBI Taxonomy" id="9606"/>
    <lineage>
        <taxon>Eukaryota</taxon>
        <taxon>Metazoa</taxon>
        <taxon>Chordata</taxon>
        <taxon>Craniata</taxon>
        <taxon>Vertebrata</taxon>
        <taxon>Euteleostomi</taxon>
        <taxon>Mammalia</taxon>
        <taxon>Eutheria</taxon>
        <taxon>Euarchontoglires</taxon>
        <taxon>Primates</taxon>
        <taxon>Haplorrhini</taxon>
        <taxon>Catarrhini</taxon>
        <taxon>Hominidae</taxon>
        <taxon>Homo</taxon>
    </lineage>
</organism>